<protein>
    <recommendedName>
        <fullName evidence="26">Cubilin</fullName>
    </recommendedName>
    <alternativeName>
        <fullName>460 kDa receptor</fullName>
    </alternativeName>
    <alternativeName>
        <fullName>Intestinal intrinsic factor receptor</fullName>
    </alternativeName>
    <alternativeName>
        <fullName>Intrinsic factor-cobalamin receptor</fullName>
    </alternativeName>
    <alternativeName>
        <fullName evidence="26">Intrinsic factor-vitamin B12 receptor</fullName>
    </alternativeName>
</protein>
<reference key="1">
    <citation type="journal article" date="1998" name="Blood">
        <title>The human intrinsic factor-vitamin B12 receptor, cubilin: molecular characterization and chromosomal mapping of the gene to 10p within the autosomal recessive megaloblastic anemia (MGA1) region.</title>
        <authorList>
            <person name="Kozyraki R."/>
            <person name="Kristiansen M."/>
            <person name="Silahtaroglu A."/>
            <person name="Hansen C."/>
            <person name="Jacobsen C."/>
            <person name="Tommerup N."/>
            <person name="Verroust P.J."/>
            <person name="Moestrup S.K."/>
        </authorList>
    </citation>
    <scope>NUCLEOTIDE SEQUENCE [MRNA]</scope>
    <scope>PROTEIN SEQUENCE OF 36-41</scope>
    <scope>FUNCTION</scope>
    <scope>BINDING TO THE CBLIF-COBALAMIN COMPLEX</scope>
    <scope>PROTEOLYTIC PROCESSING</scope>
    <scope>TISSUE SPECIFICITY</scope>
    <scope>VARIANTS SER-253; TYR-1545; ILE-1769; TYR-2162 AND TRP-2717</scope>
</reference>
<reference key="2">
    <citation type="submission" date="2007-02" db="EMBL/GenBank/DDBJ databases">
        <authorList>
            <consortium name="NHLBI resequencing and genotyping service (RS&amp;G)"/>
        </authorList>
    </citation>
    <scope>NUCLEOTIDE SEQUENCE [GENOMIC DNA]</scope>
</reference>
<reference key="3">
    <citation type="journal article" date="2004" name="Nature">
        <title>The DNA sequence and comparative analysis of human chromosome 10.</title>
        <authorList>
            <person name="Deloukas P."/>
            <person name="Earthrowl M.E."/>
            <person name="Grafham D.V."/>
            <person name="Rubenfield M."/>
            <person name="French L."/>
            <person name="Steward C.A."/>
            <person name="Sims S.K."/>
            <person name="Jones M.C."/>
            <person name="Searle S."/>
            <person name="Scott C."/>
            <person name="Howe K."/>
            <person name="Hunt S.E."/>
            <person name="Andrews T.D."/>
            <person name="Gilbert J.G.R."/>
            <person name="Swarbreck D."/>
            <person name="Ashurst J.L."/>
            <person name="Taylor A."/>
            <person name="Battles J."/>
            <person name="Bird C.P."/>
            <person name="Ainscough R."/>
            <person name="Almeida J.P."/>
            <person name="Ashwell R.I.S."/>
            <person name="Ambrose K.D."/>
            <person name="Babbage A.K."/>
            <person name="Bagguley C.L."/>
            <person name="Bailey J."/>
            <person name="Banerjee R."/>
            <person name="Bates K."/>
            <person name="Beasley H."/>
            <person name="Bray-Allen S."/>
            <person name="Brown A.J."/>
            <person name="Brown J.Y."/>
            <person name="Burford D.C."/>
            <person name="Burrill W."/>
            <person name="Burton J."/>
            <person name="Cahill P."/>
            <person name="Camire D."/>
            <person name="Carter N.P."/>
            <person name="Chapman J.C."/>
            <person name="Clark S.Y."/>
            <person name="Clarke G."/>
            <person name="Clee C.M."/>
            <person name="Clegg S."/>
            <person name="Corby N."/>
            <person name="Coulson A."/>
            <person name="Dhami P."/>
            <person name="Dutta I."/>
            <person name="Dunn M."/>
            <person name="Faulkner L."/>
            <person name="Frankish A."/>
            <person name="Frankland J.A."/>
            <person name="Garner P."/>
            <person name="Garnett J."/>
            <person name="Gribble S."/>
            <person name="Griffiths C."/>
            <person name="Grocock R."/>
            <person name="Gustafson E."/>
            <person name="Hammond S."/>
            <person name="Harley J.L."/>
            <person name="Hart E."/>
            <person name="Heath P.D."/>
            <person name="Ho T.P."/>
            <person name="Hopkins B."/>
            <person name="Horne J."/>
            <person name="Howden P.J."/>
            <person name="Huckle E."/>
            <person name="Hynds C."/>
            <person name="Johnson C."/>
            <person name="Johnson D."/>
            <person name="Kana A."/>
            <person name="Kay M."/>
            <person name="Kimberley A.M."/>
            <person name="Kershaw J.K."/>
            <person name="Kokkinaki M."/>
            <person name="Laird G.K."/>
            <person name="Lawlor S."/>
            <person name="Lee H.M."/>
            <person name="Leongamornlert D.A."/>
            <person name="Laird G."/>
            <person name="Lloyd C."/>
            <person name="Lloyd D.M."/>
            <person name="Loveland J."/>
            <person name="Lovell J."/>
            <person name="McLaren S."/>
            <person name="McLay K.E."/>
            <person name="McMurray A."/>
            <person name="Mashreghi-Mohammadi M."/>
            <person name="Matthews L."/>
            <person name="Milne S."/>
            <person name="Nickerson T."/>
            <person name="Nguyen M."/>
            <person name="Overton-Larty E."/>
            <person name="Palmer S.A."/>
            <person name="Pearce A.V."/>
            <person name="Peck A.I."/>
            <person name="Pelan S."/>
            <person name="Phillimore B."/>
            <person name="Porter K."/>
            <person name="Rice C.M."/>
            <person name="Rogosin A."/>
            <person name="Ross M.T."/>
            <person name="Sarafidou T."/>
            <person name="Sehra H.K."/>
            <person name="Shownkeen R."/>
            <person name="Skuce C.D."/>
            <person name="Smith M."/>
            <person name="Standring L."/>
            <person name="Sycamore N."/>
            <person name="Tester J."/>
            <person name="Thorpe A."/>
            <person name="Torcasso W."/>
            <person name="Tracey A."/>
            <person name="Tromans A."/>
            <person name="Tsolas J."/>
            <person name="Wall M."/>
            <person name="Walsh J."/>
            <person name="Wang H."/>
            <person name="Weinstock K."/>
            <person name="West A.P."/>
            <person name="Willey D.L."/>
            <person name="Whitehead S.L."/>
            <person name="Wilming L."/>
            <person name="Wray P.W."/>
            <person name="Young L."/>
            <person name="Chen Y."/>
            <person name="Lovering R.C."/>
            <person name="Moschonas N.K."/>
            <person name="Siebert R."/>
            <person name="Fechtel K."/>
            <person name="Bentley D."/>
            <person name="Durbin R.M."/>
            <person name="Hubbard T."/>
            <person name="Doucette-Stamm L."/>
            <person name="Beck S."/>
            <person name="Smith D.R."/>
            <person name="Rogers J."/>
        </authorList>
    </citation>
    <scope>NUCLEOTIDE SEQUENCE [LARGE SCALE GENOMIC DNA]</scope>
</reference>
<reference key="4">
    <citation type="journal article" date="1999" name="Nat. Med.">
        <title>The intrinsic factor-vitamin B12 receptor, cubilin, is a high-affinity apolipoprotein A-I receptor facilitating endocytosis of high-density lipoprotein.</title>
        <authorList>
            <person name="Kozyraki R."/>
            <person name="Fyfe J."/>
            <person name="Kristiansen M."/>
            <person name="Gerdes C."/>
            <person name="Jacobsen C."/>
            <person name="Cui S."/>
            <person name="Christensen E.I."/>
            <person name="Aminoff M."/>
            <person name="de la Chapelle A."/>
            <person name="Krahe R."/>
            <person name="Verroust P.J."/>
            <person name="Moestrup S.K."/>
        </authorList>
    </citation>
    <scope>INTERACTION WITH APOA1</scope>
    <scope>FUNCTION</scope>
</reference>
<reference key="5">
    <citation type="journal article" date="1999" name="Nat. Genet.">
        <title>Mutations in CUBN, encoding the intrinsic factor-vitamin B12 receptor, cubilin, cause hereditary megaloblastic anaemia 1.</title>
        <authorList>
            <person name="Aminoff M."/>
            <person name="Carter J.E."/>
            <person name="Chadwick R.B."/>
            <person name="Johnson C."/>
            <person name="Graesbeck R."/>
            <person name="Abdelaal M.A."/>
            <person name="Broch H."/>
            <person name="Jenner L.B."/>
            <person name="Verroust P.J."/>
            <person name="Moestrup S.K."/>
            <person name="de la Chapelle A."/>
            <person name="Krahe R."/>
        </authorList>
    </citation>
    <scope>INVOLVEMENT IN IGS1</scope>
    <scope>VARIANT IGS1 LEU-1297</scope>
    <scope>VARIANTS ILE-124; SER-253; THR-389; HIS-1032; TYR-1545; SER-1559; ILE-1769; PHE-2153; ARG-2575; ARG-2691; ILE-2879; VAL-2984; GLY-3002; ILE-3422 AND LYS-3552</scope>
</reference>
<reference key="6">
    <citation type="journal article" date="2001" name="Proc. Natl. Acad. Sci. U.S.A.">
        <title>Cubilin dysfunction causes abnormal metabolism of the steroid hormone 25(OH) vitamin D(3).</title>
        <authorList>
            <person name="Nykjaer A."/>
            <person name="Fyfe J.C."/>
            <person name="Kozyraki R."/>
            <person name="Leheste J.-R."/>
            <person name="Jacobsen C."/>
            <person name="Nielsen M.S."/>
            <person name="Verroust P.J."/>
            <person name="Aminoff M."/>
            <person name="de la Chapelle A."/>
            <person name="Moestrup S.K."/>
            <person name="Ray R."/>
            <person name="Gliemann J."/>
            <person name="Willnow T.E."/>
            <person name="Christensen E.I."/>
        </authorList>
    </citation>
    <scope>INTERACTION WITH GC</scope>
    <scope>FUNCTION</scope>
</reference>
<reference key="7">
    <citation type="journal article" date="2001" name="Proc. Natl. Acad. Sci. U.S.A.">
        <title>Megalin-dependent cubilin-mediated endocytosis is a major pathway for the apical uptake of transferrin in polarized epithelia.</title>
        <authorList>
            <person name="Kozyraki R."/>
            <person name="Fyfe J."/>
            <person name="Verroust P.J."/>
            <person name="Jacobsen C."/>
            <person name="Dautry-Varsat A."/>
            <person name="Gburek J."/>
            <person name="Willnow T.E."/>
            <person name="Christensen E.I."/>
            <person name="Moestrup S.K."/>
        </authorList>
    </citation>
    <scope>INTERACTION WITH TF</scope>
    <scope>FUNCTION</scope>
</reference>
<reference key="8">
    <citation type="journal article" date="2004" name="Blood">
        <title>The functional cobalamin (vitamin B12)-intrinsic factor receptor is a novel complex of cubilin and amnionless.</title>
        <authorList>
            <person name="Fyfe J.C."/>
            <person name="Madsen M."/>
            <person name="Hoejrup P."/>
            <person name="Christensen E.I."/>
            <person name="Tanner S.M."/>
            <person name="de la Chapelle A."/>
            <person name="He Q."/>
            <person name="Moestrup S.K."/>
        </authorList>
    </citation>
    <scope>INTERACTION WITH AMN</scope>
    <scope>GLYCOSYLATION</scope>
    <scope>FUNCTION</scope>
</reference>
<reference key="9">
    <citation type="journal article" date="2007" name="Mol. Cell. Proteomics">
        <title>Identification of the ligands of protein interaction domains through a functional approach.</title>
        <authorList>
            <person name="Caratu G."/>
            <person name="Allegra D."/>
            <person name="Bimonte M."/>
            <person name="Schiattarella G.G."/>
            <person name="D'Ambrosio C."/>
            <person name="Scaloni A."/>
            <person name="Napolitano M."/>
            <person name="Russo T."/>
            <person name="Zambrano N."/>
        </authorList>
    </citation>
    <scope>IDENTIFICATION IN A COMPLEX WITH LRP1 AND PID1</scope>
    <scope>INTERACTION WITH LRP1 AND PID1</scope>
</reference>
<reference key="10">
    <citation type="journal article" date="2018" name="Sci. Rep.">
        <title>Amnionless-mediated glycosylation is crucial for cell surface targeting of cubilin in renal and intestinal cells.</title>
        <authorList>
            <person name="Udagawa T."/>
            <person name="Harita Y."/>
            <person name="Miura K."/>
            <person name="Mitsui J."/>
            <person name="Ode K.L."/>
            <person name="Morishita S."/>
            <person name="Urae S."/>
            <person name="Kanda S."/>
            <person name="Kajiho Y."/>
            <person name="Tsurumi H."/>
            <person name="Ueda H.R."/>
            <person name="Tsuji S."/>
            <person name="Saito A."/>
            <person name="Oka A."/>
        </authorList>
    </citation>
    <scope>INTERACTION WITH AMN</scope>
    <scope>SUBCELLULAR LOCATION</scope>
    <scope>GLYCOSYLATION</scope>
</reference>
<reference key="11">
    <citation type="journal article" date="2020" name="J. Clin. Invest.">
        <title>Human C-terminal CUBN variants associate with chronic proteinuria and normal renal function.</title>
        <authorList>
            <person name="Bedin M."/>
            <person name="Boyer O."/>
            <person name="Servais A."/>
            <person name="Li Y."/>
            <person name="Villoing-Gaude L."/>
            <person name="Tete M.J."/>
            <person name="Cambier A."/>
            <person name="Hogan J."/>
            <person name="Baudouin V."/>
            <person name="Krid S."/>
            <person name="Bensman A."/>
            <person name="Lammens F."/>
            <person name="Louillet F."/>
            <person name="Ranchin B."/>
            <person name="Vigneau C."/>
            <person name="Bouteau I."/>
            <person name="Isnard-Bagnis C."/>
            <person name="Mache C.J."/>
            <person name="Schaefer T."/>
            <person name="Pape L."/>
            <person name="Goedel M."/>
            <person name="Huber T.B."/>
            <person name="Benz M."/>
            <person name="Klaus G."/>
            <person name="Hansen M."/>
            <person name="Latta K."/>
            <person name="Gribouval O."/>
            <person name="Moriniere V."/>
            <person name="Tournant C."/>
            <person name="Grohmann M."/>
            <person name="Kuhn E."/>
            <person name="Wagner T."/>
            <person name="Bole-Feysot C."/>
            <person name="Jabot-Hanin F."/>
            <person name="Nitschke P."/>
            <person name="Ahluwalia T.S."/>
            <person name="Koettgen A."/>
            <person name="Andersen C.B.F."/>
            <person name="Bergmann C."/>
            <person name="Antignac C."/>
            <person name="Simons M."/>
        </authorList>
    </citation>
    <scope>INVOLVEMENT IN PROCHOB</scope>
    <scope>VARIANTS PROCHOB MET-55; 1158-TRP--SER-3623 DEL; HIS-1303; 1487-ARG--SER-3623 DEL; 1810-ARG--SER-3623 DEL; TYR-1854; VAL-1928; TYR-1947; 2030-ARG--SER-3623 DEL; ARG-2261; TRP-2599; LEU-2822; 2831-CYS--SER-3623 DEL; 2833-TRP--SER-3623 DEL; 2903-GLN--SER-3623 DEL; SER-3018; ARG-3027; ARG-3308; 3317-GLN--SER-3623 DEL; CYS-3366; TYR-3492; ASP-3520; HIS-3609 AND 3618-ARG--SER-3623 DEL</scope>
    <scope>VARIANTS VAL-1690; ASP-2157; VAL-2914 AND VAL-2984</scope>
</reference>
<reference key="12">
    <citation type="journal article" date="2010" name="Nature">
        <title>Structural basis for receptor recognition of vitamin-B(12)-intrinsic factor complexes.</title>
        <authorList>
            <person name="Andersen C.B."/>
            <person name="Madsen M."/>
            <person name="Storm T."/>
            <person name="Moestrup S.K."/>
            <person name="Andersen G.R."/>
        </authorList>
    </citation>
    <scope>X-RAY CRYSTALLOGRAPHY (3.3 ANGSTROMS) OF 932-1388 IN COMPLEX WITH CBLIF AND CALCIUM IONS</scope>
    <scope>INTERACTION WITH CBLIF</scope>
    <scope>IDENTIFICATION IN CUBAM COMPLEX</scope>
    <scope>SUBUNIT</scope>
    <scope>DISULFIDE BONDS</scope>
    <scope>GLYCOSYLATION AT ASN-984; ASN-1092; ASN-1168; ASN-1217; ASN-1285; ASN-1307; ASN-1319 AND ASN-1332</scope>
</reference>
<reference evidence="31" key="13">
    <citation type="journal article" date="2018" name="Nat. Commun.">
        <title>Structural assembly of the megadalton-sized receptor for intestinal vitamin B12 uptake and kidney protein reabsorption.</title>
        <authorList>
            <person name="Larsen C."/>
            <person name="Etzerodt A."/>
            <person name="Madsen M."/>
            <person name="Skjodt K."/>
            <person name="Moestrup S.K."/>
            <person name="Andersen C.B.F."/>
        </authorList>
    </citation>
    <scope>X-RAY CRYSTALLOGRAPHY (2.30 ANGSTROMS) OF 26-135 IN COMPLEX WITH AMN</scope>
    <scope>SUBCELLULAR LOCATION</scope>
</reference>
<reference key="14">
    <citation type="journal article" date="2000" name="Blood">
        <title>Cubilin P1297L mutation associated with hereditary megaloblastic anemia 1 causes impaired recognition of intrinsic factor-vitamin B(12) by cubilin.</title>
        <authorList>
            <person name="Kristiansen M."/>
            <person name="Aminoff M."/>
            <person name="Jacobsen C."/>
            <person name="de La Chapelle A."/>
            <person name="Krahe R."/>
            <person name="Verroust P.J."/>
            <person name="Moestrup S.K."/>
        </authorList>
    </citation>
    <scope>CHARACTERIZATION OF VARIANT IGS1 LEU-1297</scope>
</reference>
<reference key="15">
    <citation type="journal article" date="2006" name="Science">
        <title>The consensus coding sequences of human breast and colorectal cancers.</title>
        <authorList>
            <person name="Sjoeblom T."/>
            <person name="Jones S."/>
            <person name="Wood L.D."/>
            <person name="Parsons D.W."/>
            <person name="Lin J."/>
            <person name="Barber T.D."/>
            <person name="Mandelker D."/>
            <person name="Leary R.J."/>
            <person name="Ptak J."/>
            <person name="Silliman N."/>
            <person name="Szabo S."/>
            <person name="Buckhaults P."/>
            <person name="Farrell C."/>
            <person name="Meeh P."/>
            <person name="Markowitz S.D."/>
            <person name="Willis J."/>
            <person name="Dawson D."/>
            <person name="Willson J.K.V."/>
            <person name="Gazdar A.F."/>
            <person name="Hartigan J."/>
            <person name="Wu L."/>
            <person name="Liu C."/>
            <person name="Parmigiani G."/>
            <person name="Park B.H."/>
            <person name="Bachman K.E."/>
            <person name="Papadopoulos N."/>
            <person name="Vogelstein B."/>
            <person name="Kinzler K.W."/>
            <person name="Velculescu V.E."/>
        </authorList>
    </citation>
    <scope>VARIANTS [LARGE SCALE ANALYSIS] GLN-786; VAL-2252; VAL-2914 AND VAL-3189</scope>
</reference>
<reference key="16">
    <citation type="journal article" date="2008" name="Eur. J. Pediatr.">
        <title>Imerslund-Graesbeck syndrome in a 15-year-old German girl caused by compound heterozygous mutations in CUBN.</title>
        <authorList>
            <person name="Hauck F.H."/>
            <person name="Tanner S.M."/>
            <person name="Henker J."/>
            <person name="Laass M.W."/>
        </authorList>
    </citation>
    <scope>VARIANT IGS1 LEU-337</scope>
</reference>
<reference key="17">
    <citation type="journal article" date="2011" name="J. Am. Soc. Nephrol.">
        <title>CUBN is a gene locus for albuminuria.</title>
        <authorList>
            <consortium name="CKDGen Consortium"/>
            <person name="Boger C.A."/>
            <person name="Chen M.H."/>
            <person name="Tin A."/>
            <person name="Olden M."/>
            <person name="Kottgen A."/>
            <person name="de Boer I.H."/>
            <person name="Fuchsberger C."/>
            <person name="O'Seaghdha C.M."/>
            <person name="Pattaro C."/>
            <person name="Teumer A."/>
            <person name="Liu C.T."/>
            <person name="Glazer N.L."/>
            <person name="Li M."/>
            <person name="O'Connell J.R."/>
            <person name="Tanaka T."/>
            <person name="Peralta C.A."/>
            <person name="Kutalik Z."/>
            <person name="Luan J."/>
            <person name="Zhao J.H."/>
            <person name="Hwang S.J."/>
            <person name="Akylbekova E."/>
            <person name="Kramer H."/>
            <person name="van der Harst P."/>
            <person name="Smith A.V."/>
            <person name="Lohman K."/>
            <person name="de Andrade M."/>
            <person name="Hayward C."/>
            <person name="Kollerits B."/>
            <person name="Tonjes A."/>
            <person name="Aspelund T."/>
            <person name="Ingelsson E."/>
            <person name="Eiriksdottir G."/>
            <person name="Launer L.J."/>
            <person name="Harris T.B."/>
            <person name="Shuldiner A.R."/>
            <person name="Mitchell B.D."/>
            <person name="Arking D.E."/>
            <person name="Franceschini N."/>
            <person name="Boerwinkle E."/>
            <person name="Egan J."/>
            <person name="Hernandez D."/>
            <person name="Reilly M."/>
            <person name="Townsend R.R."/>
            <person name="Lumley T."/>
            <person name="Siscovick D.S."/>
            <person name="Psaty B.M."/>
            <person name="Kestenbaum B."/>
            <person name="Haritunians T."/>
            <person name="Bergmann S."/>
            <person name="Vollenweider P."/>
            <person name="Waeber G."/>
            <person name="Mooser V."/>
            <person name="Waterworth D."/>
            <person name="Johnson A.D."/>
            <person name="Florez J.C."/>
            <person name="Meigs J.B."/>
            <person name="Lu X."/>
            <person name="Turner S.T."/>
            <person name="Atkinson E.J."/>
            <person name="Leak T.S."/>
            <person name="Aasarod K."/>
            <person name="Skorpen F."/>
            <person name="Syvanen A.C."/>
            <person name="Illig T."/>
            <person name="Baumert J."/>
            <person name="Koenig W."/>
            <person name="Kramer B.K."/>
            <person name="Devuyst O."/>
            <person name="Mychaleckyj J.C."/>
            <person name="Minelli C."/>
            <person name="Bakker S.J."/>
            <person name="Kedenko L."/>
            <person name="Paulweber B."/>
            <person name="Coassin S."/>
            <person name="Endlich K."/>
            <person name="Kroemer H.K."/>
            <person name="Biffar R."/>
            <person name="Stracke S."/>
            <person name="Volzke H."/>
            <person name="Stumvoll M."/>
            <person name="Magi R."/>
            <person name="Campbell H."/>
            <person name="Vitart V."/>
            <person name="Hastie N.D."/>
            <person name="Gudnason V."/>
            <person name="Kardia S.L."/>
            <person name="Liu Y."/>
            <person name="Polasek O."/>
            <person name="Curhan G."/>
            <person name="Kronenberg F."/>
            <person name="Prokopenko I."/>
            <person name="Rudan I."/>
            <person name="Arnlov J."/>
            <person name="Hallan S."/>
            <person name="Navis G."/>
            <person name="Parsa A."/>
            <person name="Ferrucci L."/>
            <person name="Coresh J."/>
            <person name="Shlipak M.G."/>
            <person name="Bull S.B."/>
            <person name="Paterson N.J."/>
            <person name="Wichmann H.E."/>
            <person name="Wareham N.J."/>
            <person name="Loos R.J."/>
            <person name="Rotter J.I."/>
            <person name="Pramstaller P.P."/>
            <person name="Cupples L.A."/>
            <person name="Beckmann J.S."/>
            <person name="Yang Q."/>
            <person name="Heid I.M."/>
            <person name="Rettig R."/>
            <person name="Dreisbach A.W."/>
            <person name="Bochud M."/>
            <person name="Fox C.S."/>
            <person name="Kao W.H."/>
        </authorList>
    </citation>
    <scope>VARIANT VAL-2984</scope>
</reference>
<reference key="18">
    <citation type="journal article" date="2011" name="Nature">
        <title>Exome sequencing identifies frequent mutation of the SWI/SNF complex gene PBRM1 in renal carcinoma.</title>
        <authorList>
            <person name="Varela I."/>
            <person name="Tarpey P."/>
            <person name="Raine K."/>
            <person name="Huang D."/>
            <person name="Ong C.K."/>
            <person name="Stephens P."/>
            <person name="Davies H."/>
            <person name="Jones D."/>
            <person name="Lin M.L."/>
            <person name="Teague J."/>
            <person name="Bignell G."/>
            <person name="Butler A."/>
            <person name="Cho J."/>
            <person name="Dalgliesh G.L."/>
            <person name="Galappaththige D."/>
            <person name="Greenman C."/>
            <person name="Hardy C."/>
            <person name="Jia M."/>
            <person name="Latimer C."/>
            <person name="Lau K.W."/>
            <person name="Marshall J."/>
            <person name="McLaren S."/>
            <person name="Menzies A."/>
            <person name="Mudie L."/>
            <person name="Stebbings L."/>
            <person name="Largaespada D.A."/>
            <person name="Wessels L.F.A."/>
            <person name="Richard S."/>
            <person name="Kahnoski R.J."/>
            <person name="Anema J."/>
            <person name="Tuveson D.A."/>
            <person name="Perez-Mancera P.A."/>
            <person name="Mustonen V."/>
            <person name="Fischer A."/>
            <person name="Adams D.J."/>
            <person name="Rust A."/>
            <person name="Chan-On W."/>
            <person name="Subimerb C."/>
            <person name="Dykema K."/>
            <person name="Furge K."/>
            <person name="Campbell P.J."/>
            <person name="Teh B.T."/>
            <person name="Stratton M.R."/>
            <person name="Futreal P.A."/>
        </authorList>
    </citation>
    <scope>VARIANT GLY-3258</scope>
</reference>
<reference key="19">
    <citation type="journal article" date="2012" name="BMC Nephrol.">
        <title>Linkage disequilibrium analysis reveals an albuminuria risk haplotype containing three missense mutations in the cubilin gene with striking differences among European and African ancestry populations.</title>
        <authorList>
            <person name="Tzur S."/>
            <person name="Wasser W.G."/>
            <person name="Rosset S."/>
            <person name="Skorecki K."/>
        </authorList>
    </citation>
    <scope>VARIANTS PHE-2153; VAL-2984 AND GLY-3002</scope>
</reference>
<reference key="20">
    <citation type="journal article" date="2013" name="BMC Med. Genet.">
        <title>Detailed investigations of proximal tubular function in Imerslund-Graesbeck syndrome.</title>
        <authorList>
            <person name="Storm T."/>
            <person name="Zeitz C."/>
            <person name="Cases O."/>
            <person name="Amsellem S."/>
            <person name="Verroust P.J."/>
            <person name="Madsen M."/>
            <person name="Benoist J.F."/>
            <person name="Passemard S."/>
            <person name="Lebon S."/>
            <person name="Joensson I.M."/>
            <person name="Emma F."/>
            <person name="Koldsoe H."/>
            <person name="Hertz J.M."/>
            <person name="Nielsen R."/>
            <person name="Christensen E.I."/>
            <person name="Kozyraki R."/>
        </authorList>
    </citation>
    <scope>VARIANTS IGS1 GLU-1112 AND LEU-1297</scope>
    <scope>CHARACTERIZATION OF VARIANT IGS1 GLU-1112</scope>
</reference>
<name>CUBN_HUMAN</name>
<feature type="signal peptide" evidence="5">
    <location>
        <begin position="1"/>
        <end position="23"/>
    </location>
</feature>
<feature type="propeptide" id="PRO_0000046072" description="Removed in mature form" evidence="25">
    <location>
        <begin position="24"/>
        <end position="35"/>
    </location>
</feature>
<feature type="chain" id="PRO_0000046073" description="Cubilin">
    <location>
        <begin position="36"/>
        <end position="3623"/>
    </location>
</feature>
<feature type="domain" description="EGF-like 1" evidence="7">
    <location>
        <begin position="132"/>
        <end position="168"/>
    </location>
</feature>
<feature type="domain" description="EGF-like 2; calcium-binding" evidence="7">
    <location>
        <begin position="170"/>
        <end position="211"/>
    </location>
</feature>
<feature type="domain" description="EGF-like 3; calcium-binding" evidence="7">
    <location>
        <begin position="263"/>
        <end position="304"/>
    </location>
</feature>
<feature type="domain" description="EGF-like 4; calcium-binding" evidence="7">
    <location>
        <begin position="305"/>
        <end position="348"/>
    </location>
</feature>
<feature type="domain" description="EGF-like 5" evidence="7">
    <location>
        <begin position="349"/>
        <end position="385"/>
    </location>
</feature>
<feature type="domain" description="EGF-like 6" evidence="7">
    <location>
        <begin position="395"/>
        <end position="430"/>
    </location>
</feature>
<feature type="domain" description="EGF-like 7; calcium-binding" evidence="7">
    <location>
        <begin position="432"/>
        <end position="468"/>
    </location>
</feature>
<feature type="domain" description="CUB 1" evidence="6">
    <location>
        <begin position="474"/>
        <end position="586"/>
    </location>
</feature>
<feature type="domain" description="CUB 2" evidence="6">
    <location>
        <begin position="590"/>
        <end position="702"/>
    </location>
</feature>
<feature type="domain" description="CUB 3" evidence="6">
    <location>
        <begin position="708"/>
        <end position="816"/>
    </location>
</feature>
<feature type="domain" description="CUB 4" evidence="6">
    <location>
        <begin position="816"/>
        <end position="928"/>
    </location>
</feature>
<feature type="domain" description="CUB 5" evidence="6">
    <location>
        <begin position="932"/>
        <end position="1042"/>
    </location>
</feature>
<feature type="domain" description="CUB 6" evidence="6">
    <location>
        <begin position="1048"/>
        <end position="1161"/>
    </location>
</feature>
<feature type="domain" description="CUB 7" evidence="6">
    <location>
        <begin position="1165"/>
        <end position="1277"/>
    </location>
</feature>
<feature type="domain" description="CUB 8" evidence="6">
    <location>
        <begin position="1278"/>
        <end position="1389"/>
    </location>
</feature>
<feature type="domain" description="CUB 9" evidence="6">
    <location>
        <begin position="1391"/>
        <end position="1506"/>
    </location>
</feature>
<feature type="domain" description="CUB 10" evidence="6">
    <location>
        <begin position="1510"/>
        <end position="1619"/>
    </location>
</feature>
<feature type="domain" description="CUB 11" evidence="6">
    <location>
        <begin position="1620"/>
        <end position="1734"/>
    </location>
</feature>
<feature type="domain" description="CUB 12" evidence="6">
    <location>
        <begin position="1738"/>
        <end position="1850"/>
    </location>
</feature>
<feature type="domain" description="CUB 13" evidence="6">
    <location>
        <begin position="1852"/>
        <end position="1963"/>
    </location>
</feature>
<feature type="domain" description="CUB 14" evidence="6">
    <location>
        <begin position="1978"/>
        <end position="2091"/>
    </location>
</feature>
<feature type="domain" description="CUB 15" evidence="6">
    <location>
        <begin position="2092"/>
        <end position="2213"/>
    </location>
</feature>
<feature type="domain" description="CUB 16" evidence="6">
    <location>
        <begin position="2217"/>
        <end position="2334"/>
    </location>
</feature>
<feature type="domain" description="CUB 17" evidence="6">
    <location>
        <begin position="2336"/>
        <end position="2448"/>
    </location>
</feature>
<feature type="domain" description="CUB 18" evidence="6">
    <location>
        <begin position="2452"/>
        <end position="2565"/>
    </location>
</feature>
<feature type="domain" description="CUB 19" evidence="6">
    <location>
        <begin position="2570"/>
        <end position="2687"/>
    </location>
</feature>
<feature type="domain" description="CUB 20" evidence="6">
    <location>
        <begin position="2689"/>
        <end position="2801"/>
    </location>
</feature>
<feature type="domain" description="CUB 21" evidence="6">
    <location>
        <begin position="2805"/>
        <end position="2919"/>
    </location>
</feature>
<feature type="domain" description="CUB 22" evidence="6">
    <location>
        <begin position="2920"/>
        <end position="3035"/>
    </location>
</feature>
<feature type="domain" description="CUB 23" evidence="6">
    <location>
        <begin position="3037"/>
        <end position="3150"/>
    </location>
</feature>
<feature type="domain" description="CUB 24" evidence="6">
    <location>
        <begin position="3157"/>
        <end position="3274"/>
    </location>
</feature>
<feature type="domain" description="CUB 25" evidence="6">
    <location>
        <begin position="3278"/>
        <end position="3393"/>
    </location>
</feature>
<feature type="domain" description="CUB 26" evidence="6">
    <location>
        <begin position="3395"/>
        <end position="3507"/>
    </location>
</feature>
<feature type="domain" description="CUB 27" evidence="6">
    <location>
        <begin position="3511"/>
        <end position="3623"/>
    </location>
</feature>
<feature type="region of interest" description="Interaction with AMN" evidence="23">
    <location>
        <begin position="42"/>
        <end position="49"/>
    </location>
</feature>
<feature type="binding site" evidence="28 30">
    <location>
        <position position="980"/>
    </location>
    <ligand>
        <name>Ca(2+)</name>
        <dbReference type="ChEBI" id="CHEBI:29108"/>
        <label>1</label>
    </ligand>
</feature>
<feature type="binding site" evidence="28 30">
    <location>
        <position position="988"/>
    </location>
    <ligand>
        <name>Ca(2+)</name>
        <dbReference type="ChEBI" id="CHEBI:29108"/>
        <label>1</label>
    </ligand>
</feature>
<feature type="binding site" evidence="28 30">
    <location>
        <position position="1027"/>
    </location>
    <ligand>
        <name>Ca(2+)</name>
        <dbReference type="ChEBI" id="CHEBI:29108"/>
        <label>1</label>
    </ligand>
</feature>
<feature type="binding site" evidence="28 30">
    <location>
        <position position="1029"/>
    </location>
    <ligand>
        <name>Ca(2+)</name>
        <dbReference type="ChEBI" id="CHEBI:29108"/>
        <label>1</label>
    </ligand>
</feature>
<feature type="binding site" evidence="28 30">
    <location>
        <position position="1030"/>
    </location>
    <ligand>
        <name>Ca(2+)</name>
        <dbReference type="ChEBI" id="CHEBI:29108"/>
        <label>1</label>
    </ligand>
</feature>
<feature type="binding site" evidence="28 30">
    <location>
        <position position="1096"/>
    </location>
    <ligand>
        <name>Ca(2+)</name>
        <dbReference type="ChEBI" id="CHEBI:29108"/>
        <label>2</label>
    </ligand>
</feature>
<feature type="binding site" evidence="28 30">
    <location>
        <position position="1105"/>
    </location>
    <ligand>
        <name>Ca(2+)</name>
        <dbReference type="ChEBI" id="CHEBI:29108"/>
        <label>2</label>
    </ligand>
</feature>
<feature type="binding site" evidence="28 30">
    <location>
        <position position="1146"/>
    </location>
    <ligand>
        <name>Ca(2+)</name>
        <dbReference type="ChEBI" id="CHEBI:29108"/>
        <label>2</label>
    </ligand>
</feature>
<feature type="binding site" evidence="28 30">
    <location>
        <position position="1148"/>
    </location>
    <ligand>
        <name>Ca(2+)</name>
        <dbReference type="ChEBI" id="CHEBI:29108"/>
        <label>2</label>
    </ligand>
</feature>
<feature type="binding site" evidence="28 30">
    <location>
        <position position="1149"/>
    </location>
    <ligand>
        <name>Ca(2+)</name>
        <dbReference type="ChEBI" id="CHEBI:29108"/>
        <label>2</label>
    </ligand>
</feature>
<feature type="binding site" evidence="28 30">
    <location>
        <position position="1213"/>
    </location>
    <ligand>
        <name>Ca(2+)</name>
        <dbReference type="ChEBI" id="CHEBI:29108"/>
        <label>3</label>
    </ligand>
</feature>
<feature type="binding site" evidence="28 30">
    <location>
        <position position="1221"/>
    </location>
    <ligand>
        <name>Ca(2+)</name>
        <dbReference type="ChEBI" id="CHEBI:29108"/>
        <label>3</label>
    </ligand>
</feature>
<feature type="binding site" evidence="28 30">
    <location>
        <position position="1262"/>
    </location>
    <ligand>
        <name>Ca(2+)</name>
        <dbReference type="ChEBI" id="CHEBI:29108"/>
        <label>3</label>
    </ligand>
</feature>
<feature type="binding site" evidence="28 30">
    <location>
        <position position="1264"/>
    </location>
    <ligand>
        <name>Ca(2+)</name>
        <dbReference type="ChEBI" id="CHEBI:29108"/>
        <label>3</label>
    </ligand>
</feature>
<feature type="binding site" evidence="28 30">
    <location>
        <position position="1265"/>
    </location>
    <ligand>
        <name>Ca(2+)</name>
        <dbReference type="ChEBI" id="CHEBI:29108"/>
        <label>3</label>
    </ligand>
</feature>
<feature type="binding site" evidence="28 30">
    <location>
        <position position="1328"/>
    </location>
    <ligand>
        <name>Ca(2+)</name>
        <dbReference type="ChEBI" id="CHEBI:29108"/>
        <label>4</label>
    </ligand>
</feature>
<feature type="binding site" evidence="28 30">
    <location>
        <position position="1336"/>
    </location>
    <ligand>
        <name>Ca(2+)</name>
        <dbReference type="ChEBI" id="CHEBI:29108"/>
        <label>4</label>
    </ligand>
</feature>
<feature type="binding site" evidence="28 30">
    <location>
        <position position="1373"/>
    </location>
    <ligand>
        <name>Ca(2+)</name>
        <dbReference type="ChEBI" id="CHEBI:29108"/>
        <label>4</label>
    </ligand>
</feature>
<feature type="binding site" evidence="28 30">
    <location>
        <position position="1375"/>
    </location>
    <ligand>
        <name>Ca(2+)</name>
        <dbReference type="ChEBI" id="CHEBI:29108"/>
        <label>4</label>
    </ligand>
</feature>
<feature type="site" description="Cleavage; by furin" evidence="5">
    <location>
        <begin position="35"/>
        <end position="36"/>
    </location>
</feature>
<feature type="modified residue" description="Phosphothreonine" evidence="3">
    <location>
        <position position="3008"/>
    </location>
</feature>
<feature type="glycosylation site" description="N-linked (GlcNAc...) asparagine" evidence="5">
    <location>
        <position position="105"/>
    </location>
</feature>
<feature type="glycosylation site" description="N-linked (GlcNAc...) asparagine" evidence="5">
    <location>
        <position position="428"/>
    </location>
</feature>
<feature type="glycosylation site" description="N-linked (GlcNAc...) asparagine" evidence="5">
    <location>
        <position position="482"/>
    </location>
</feature>
<feature type="glycosylation site" description="N-linked (GlcNAc...) asparagine" evidence="5">
    <location>
        <position position="711"/>
    </location>
</feature>
<feature type="glycosylation site" description="N-linked (GlcNAc...) asparagine" evidence="5">
    <location>
        <position position="749"/>
    </location>
</feature>
<feature type="glycosylation site" description="N-linked (GlcNAc...) asparagine" evidence="5">
    <location>
        <position position="781"/>
    </location>
</feature>
<feature type="glycosylation site" description="N-linked (GlcNAc...) asparagine" evidence="5">
    <location>
        <position position="857"/>
    </location>
</feature>
<feature type="glycosylation site" description="N-linked (GlcNAc...) asparagine" evidence="5">
    <location>
        <position position="957"/>
    </location>
</feature>
<feature type="glycosylation site" description="N-linked (GlcNAc...) asparagine" evidence="17 30">
    <location>
        <position position="984"/>
    </location>
</feature>
<feature type="glycosylation site" description="N-linked (GlcNAc...) asparagine" evidence="17 30">
    <location>
        <position position="1092"/>
    </location>
</feature>
<feature type="glycosylation site" description="N-linked (GlcNAc...) asparagine" evidence="17 30">
    <location>
        <position position="1168"/>
    </location>
</feature>
<feature type="glycosylation site" description="N-linked (GlcNAc...) asparagine" evidence="17 30">
    <location>
        <position position="1217"/>
    </location>
</feature>
<feature type="glycosylation site" description="N-linked (GlcNAc...) asparagine" evidence="17 30">
    <location>
        <position position="1285"/>
    </location>
</feature>
<feature type="glycosylation site" description="N-linked (GlcNAc...) asparagine" evidence="17 30">
    <location>
        <position position="1307"/>
    </location>
</feature>
<feature type="glycosylation site" description="N-linked (GlcNAc...) asparagine" evidence="17 30">
    <location>
        <position position="1319"/>
    </location>
</feature>
<feature type="glycosylation site" description="N-linked (GlcNAc...) asparagine" evidence="17 30">
    <location>
        <position position="1332"/>
    </location>
</feature>
<feature type="glycosylation site" description="N-linked (GlcNAc...) asparagine" evidence="5">
    <location>
        <position position="1500"/>
    </location>
</feature>
<feature type="glycosylation site" description="N-linked (GlcNAc...) asparagine" evidence="5">
    <location>
        <position position="1551"/>
    </location>
</feature>
<feature type="glycosylation site" description="N-linked (GlcNAc...) asparagine" evidence="5">
    <location>
        <position position="1646"/>
    </location>
</feature>
<feature type="glycosylation site" description="N-linked (GlcNAc...) asparagine" evidence="5">
    <location>
        <position position="1802"/>
    </location>
</feature>
<feature type="glycosylation site" description="N-linked (GlcNAc...) asparagine" evidence="5">
    <location>
        <position position="1819"/>
    </location>
</feature>
<feature type="glycosylation site" description="N-linked (GlcNAc...) asparagine" evidence="5">
    <location>
        <position position="1885"/>
    </location>
</feature>
<feature type="glycosylation site" description="N-linked (GlcNAc...) asparagine" evidence="5">
    <location>
        <position position="2085"/>
    </location>
</feature>
<feature type="glycosylation site" description="N-linked (GlcNAc...) asparagine" evidence="5">
    <location>
        <position position="2117"/>
    </location>
</feature>
<feature type="glycosylation site" description="N-linked (GlcNAc...) asparagine" evidence="5">
    <location>
        <position position="2274"/>
    </location>
</feature>
<feature type="glycosylation site" description="N-linked (GlcNAc...) asparagine" evidence="5">
    <location>
        <position position="2386"/>
    </location>
</feature>
<feature type="glycosylation site" description="N-linked (GlcNAc...) asparagine" evidence="5">
    <location>
        <position position="2400"/>
    </location>
</feature>
<feature type="glycosylation site" description="N-linked (GlcNAc...) asparagine" evidence="5">
    <location>
        <position position="2531"/>
    </location>
</feature>
<feature type="glycosylation site" description="N-linked (GlcNAc...) asparagine" evidence="5">
    <location>
        <position position="2581"/>
    </location>
</feature>
<feature type="glycosylation site" description="N-linked (GlcNAc...) asparagine" evidence="5">
    <location>
        <position position="2592"/>
    </location>
</feature>
<feature type="glycosylation site" description="N-linked (GlcNAc...) asparagine" evidence="5">
    <location>
        <position position="2610"/>
    </location>
</feature>
<feature type="glycosylation site" description="N-linked (GlcNAc...) asparagine" evidence="5">
    <location>
        <position position="2813"/>
    </location>
</feature>
<feature type="glycosylation site" description="N-linked (GlcNAc...) asparagine" evidence="5">
    <location>
        <position position="2923"/>
    </location>
</feature>
<feature type="glycosylation site" description="N-linked (GlcNAc...) asparagine" evidence="5">
    <location>
        <position position="2945"/>
    </location>
</feature>
<feature type="glycosylation site" description="N-linked (GlcNAc...) asparagine" evidence="5">
    <location>
        <position position="3042"/>
    </location>
</feature>
<feature type="glycosylation site" description="N-linked (GlcNAc...) asparagine" evidence="5">
    <location>
        <position position="3103"/>
    </location>
</feature>
<feature type="glycosylation site" description="N-linked (GlcNAc...) asparagine" evidence="5">
    <location>
        <position position="3125"/>
    </location>
</feature>
<feature type="glycosylation site" description="N-linked (GlcNAc...) asparagine" evidence="5">
    <location>
        <position position="3165"/>
    </location>
</feature>
<feature type="glycosylation site" description="N-linked (GlcNAc...) asparagine" evidence="5">
    <location>
        <position position="3268"/>
    </location>
</feature>
<feature type="glycosylation site" description="N-linked (GlcNAc...) asparagine" evidence="5">
    <location>
        <position position="3283"/>
    </location>
</feature>
<feature type="glycosylation site" description="N-linked (GlcNAc...) asparagine" evidence="5">
    <location>
        <position position="3290"/>
    </location>
</feature>
<feature type="glycosylation site" description="N-linked (GlcNAc...) asparagine" evidence="5">
    <location>
        <position position="3295"/>
    </location>
</feature>
<feature type="glycosylation site" description="N-linked (GlcNAc...) asparagine" evidence="5">
    <location>
        <position position="3357"/>
    </location>
</feature>
<feature type="glycosylation site" description="N-linked (GlcNAc...) asparagine" evidence="5">
    <location>
        <position position="3430"/>
    </location>
</feature>
<feature type="glycosylation site" description="N-linked (GlcNAc...) asparagine" evidence="5">
    <location>
        <position position="3457"/>
    </location>
</feature>
<feature type="glycosylation site" description="N-linked (GlcNAc...) asparagine" evidence="5">
    <location>
        <position position="3533"/>
    </location>
</feature>
<feature type="glycosylation site" description="N-linked (GlcNAc...) asparagine" evidence="5">
    <location>
        <position position="3576"/>
    </location>
</feature>
<feature type="disulfide bond" evidence="1">
    <location>
        <begin position="136"/>
        <end position="147"/>
    </location>
</feature>
<feature type="disulfide bond" evidence="1">
    <location>
        <begin position="141"/>
        <end position="156"/>
    </location>
</feature>
<feature type="disulfide bond" evidence="1">
    <location>
        <begin position="158"/>
        <end position="167"/>
    </location>
</feature>
<feature type="disulfide bond" evidence="1">
    <location>
        <begin position="174"/>
        <end position="190"/>
    </location>
</feature>
<feature type="disulfide bond" evidence="1">
    <location>
        <begin position="184"/>
        <end position="199"/>
    </location>
</feature>
<feature type="disulfide bond" evidence="1">
    <location>
        <begin position="201"/>
        <end position="210"/>
    </location>
</feature>
<feature type="disulfide bond" evidence="1">
    <location>
        <begin position="267"/>
        <end position="280"/>
    </location>
</feature>
<feature type="disulfide bond" evidence="1">
    <location>
        <begin position="274"/>
        <end position="289"/>
    </location>
</feature>
<feature type="disulfide bond" evidence="1">
    <location>
        <begin position="292"/>
        <end position="303"/>
    </location>
</feature>
<feature type="disulfide bond" evidence="1">
    <location>
        <begin position="353"/>
        <end position="366"/>
    </location>
</feature>
<feature type="disulfide bond" evidence="1">
    <location>
        <begin position="360"/>
        <end position="376"/>
    </location>
</feature>
<feature type="disulfide bond" evidence="1">
    <location>
        <begin position="399"/>
        <end position="409"/>
    </location>
</feature>
<feature type="disulfide bond" evidence="1">
    <location>
        <begin position="404"/>
        <end position="418"/>
    </location>
</feature>
<feature type="disulfide bond" evidence="1">
    <location>
        <begin position="420"/>
        <end position="429"/>
    </location>
</feature>
<feature type="disulfide bond" evidence="1">
    <location>
        <begin position="436"/>
        <end position="447"/>
    </location>
</feature>
<feature type="disulfide bond" evidence="1">
    <location>
        <begin position="441"/>
        <end position="456"/>
    </location>
</feature>
<feature type="disulfide bond" evidence="1">
    <location>
        <begin position="458"/>
        <end position="467"/>
    </location>
</feature>
<feature type="disulfide bond" evidence="1">
    <location>
        <begin position="474"/>
        <end position="500"/>
    </location>
</feature>
<feature type="disulfide bond" evidence="1">
    <location>
        <begin position="527"/>
        <end position="549"/>
    </location>
</feature>
<feature type="disulfide bond" evidence="1">
    <location>
        <begin position="590"/>
        <end position="616"/>
    </location>
</feature>
<feature type="disulfide bond" evidence="1">
    <location>
        <begin position="643"/>
        <end position="665"/>
    </location>
</feature>
<feature type="disulfide bond" evidence="1">
    <location>
        <begin position="708"/>
        <end position="734"/>
    </location>
</feature>
<feature type="disulfide bond" evidence="1">
    <location>
        <begin position="869"/>
        <end position="891"/>
    </location>
</feature>
<feature type="disulfide bond" evidence="17 30">
    <location>
        <begin position="932"/>
        <end position="958"/>
    </location>
</feature>
<feature type="disulfide bond" evidence="17 30">
    <location>
        <begin position="985"/>
        <end position="1005"/>
    </location>
</feature>
<feature type="disulfide bond" evidence="17 30">
    <location>
        <begin position="1048"/>
        <end position="1074"/>
    </location>
</feature>
<feature type="disulfide bond" evidence="17 30">
    <location>
        <begin position="1165"/>
        <end position="1191"/>
    </location>
</feature>
<feature type="disulfide bond" evidence="17 30">
    <location>
        <begin position="1218"/>
        <end position="1240"/>
    </location>
</feature>
<feature type="disulfide bond" evidence="17 30">
    <location>
        <begin position="1278"/>
        <end position="1306"/>
    </location>
</feature>
<feature type="disulfide bond" evidence="17 30">
    <location>
        <begin position="1333"/>
        <end position="1351"/>
    </location>
</feature>
<feature type="disulfide bond" evidence="1">
    <location>
        <begin position="1391"/>
        <end position="1417"/>
    </location>
</feature>
<feature type="disulfide bond" evidence="1">
    <location>
        <begin position="1444"/>
        <end position="1466"/>
    </location>
</feature>
<feature type="disulfide bond" evidence="1">
    <location>
        <begin position="1510"/>
        <end position="1536"/>
    </location>
</feature>
<feature type="disulfide bond" evidence="1">
    <location>
        <begin position="1563"/>
        <end position="1581"/>
    </location>
</feature>
<feature type="disulfide bond" evidence="1">
    <location>
        <begin position="1620"/>
        <end position="1647"/>
    </location>
</feature>
<feature type="disulfide bond" evidence="1">
    <location>
        <begin position="1675"/>
        <end position="1697"/>
    </location>
</feature>
<feature type="disulfide bond" evidence="1">
    <location>
        <begin position="1738"/>
        <end position="1764"/>
    </location>
</feature>
<feature type="disulfide bond" evidence="1">
    <location>
        <begin position="1791"/>
        <end position="1812"/>
    </location>
</feature>
<feature type="disulfide bond" evidence="1">
    <location>
        <begin position="1905"/>
        <end position="1927"/>
    </location>
</feature>
<feature type="disulfide bond" evidence="1">
    <location>
        <begin position="1978"/>
        <end position="2006"/>
    </location>
</feature>
<feature type="disulfide bond" evidence="1">
    <location>
        <begin position="2032"/>
        <end position="2054"/>
    </location>
</feature>
<feature type="disulfide bond" evidence="1">
    <location>
        <begin position="2092"/>
        <end position="2118"/>
    </location>
</feature>
<feature type="disulfide bond" evidence="1">
    <location>
        <begin position="2217"/>
        <end position="2247"/>
    </location>
</feature>
<feature type="disulfide bond" evidence="1">
    <location>
        <begin position="2275"/>
        <end position="2297"/>
    </location>
</feature>
<feature type="disulfide bond" evidence="1">
    <location>
        <begin position="2336"/>
        <end position="2363"/>
    </location>
</feature>
<feature type="disulfide bond" evidence="1">
    <location>
        <begin position="2390"/>
        <end position="2411"/>
    </location>
</feature>
<feature type="disulfide bond" evidence="1">
    <location>
        <begin position="2452"/>
        <end position="2478"/>
    </location>
</feature>
<feature type="disulfide bond" evidence="1">
    <location>
        <begin position="2505"/>
        <end position="2527"/>
    </location>
</feature>
<feature type="disulfide bond" evidence="1">
    <location>
        <begin position="2570"/>
        <end position="2599"/>
    </location>
</feature>
<feature type="disulfide bond" evidence="1">
    <location>
        <begin position="2628"/>
        <end position="2649"/>
    </location>
</feature>
<feature type="disulfide bond" evidence="1">
    <location>
        <begin position="2689"/>
        <end position="2715"/>
    </location>
</feature>
<feature type="disulfide bond" evidence="1">
    <location>
        <begin position="2742"/>
        <end position="2764"/>
    </location>
</feature>
<feature type="disulfide bond" evidence="1">
    <location>
        <begin position="2805"/>
        <end position="2831"/>
    </location>
</feature>
<feature type="disulfide bond" evidence="1">
    <location>
        <begin position="2860"/>
        <end position="2883"/>
    </location>
</feature>
<feature type="disulfide bond" evidence="1">
    <location>
        <begin position="2920"/>
        <end position="2946"/>
    </location>
</feature>
<feature type="disulfide bond" evidence="1">
    <location>
        <begin position="2977"/>
        <end position="2999"/>
    </location>
</feature>
<feature type="disulfide bond" evidence="1">
    <location>
        <begin position="3037"/>
        <end position="3064"/>
    </location>
</feature>
<feature type="disulfide bond" evidence="1">
    <location>
        <begin position="3091"/>
        <end position="3113"/>
    </location>
</feature>
<feature type="disulfide bond" evidence="1">
    <location>
        <begin position="3157"/>
        <end position="3185"/>
    </location>
</feature>
<feature type="disulfide bond" evidence="1">
    <location>
        <begin position="3215"/>
        <end position="3237"/>
    </location>
</feature>
<feature type="disulfide bond" evidence="1">
    <location>
        <begin position="3278"/>
        <end position="3306"/>
    </location>
</feature>
<feature type="disulfide bond" evidence="1">
    <location>
        <begin position="3332"/>
        <end position="3354"/>
    </location>
</feature>
<feature type="disulfide bond" evidence="1">
    <location>
        <begin position="3395"/>
        <end position="3421"/>
    </location>
</feature>
<feature type="disulfide bond" evidence="1">
    <location>
        <begin position="3448"/>
        <end position="3470"/>
    </location>
</feature>
<feature type="disulfide bond" evidence="1">
    <location>
        <begin position="3511"/>
        <end position="3537"/>
    </location>
</feature>
<feature type="disulfide bond" evidence="1">
    <location>
        <begin position="3564"/>
        <end position="3586"/>
    </location>
</feature>
<feature type="sequence variant" id="VAR_084400" description="In PROCHOB; uncertain significance; dbSNP:rs774556167." evidence="24">
    <original>T</original>
    <variation>M</variation>
    <location>
        <position position="55"/>
    </location>
</feature>
<feature type="sequence variant" id="VAR_047443" description="In dbSNP:rs12259370.">
    <original>G</original>
    <variation>R</variation>
    <location>
        <position position="66"/>
    </location>
</feature>
<feature type="sequence variant" id="VAR_025284" description="In dbSNP:rs1801220." evidence="8">
    <original>F</original>
    <variation>I</variation>
    <location>
        <position position="124"/>
    </location>
</feature>
<feature type="sequence variant" id="VAR_025285" description="In dbSNP:rs1801222." evidence="8 25">
    <original>F</original>
    <variation>S</variation>
    <location>
        <position position="253"/>
    </location>
</feature>
<feature type="sequence variant" id="VAR_061154" description="In dbSNP:rs57335729.">
    <original>A</original>
    <variation>T</variation>
    <location>
        <position position="335"/>
    </location>
</feature>
<feature type="sequence variant" id="VAR_084401" description="In IGS1; dbSNP:rs202153130." evidence="16">
    <original>P</original>
    <variation>L</variation>
    <location>
        <position position="337"/>
    </location>
</feature>
<feature type="sequence variant" id="VAR_025286" description="In dbSNP:rs1801224." evidence="8">
    <original>P</original>
    <variation>T</variation>
    <location>
        <position position="389"/>
    </location>
</feature>
<feature type="sequence variant" id="VAR_047444" description="In dbSNP:rs2228053.">
    <original>I</original>
    <variation>M</variation>
    <location>
        <position position="504"/>
    </location>
</feature>
<feature type="sequence variant" id="VAR_047445" description="In dbSNP:rs7905349.">
    <original>H</original>
    <variation>Y</variation>
    <location>
        <position position="730"/>
    </location>
</feature>
<feature type="sequence variant" id="VAR_035829" description="In a breast cancer sample; somatic mutation; dbSNP:rs1228797857." evidence="14">
    <original>H</original>
    <variation>Q</variation>
    <location>
        <position position="786"/>
    </location>
</feature>
<feature type="sequence variant" id="VAR_047446" description="In dbSNP:rs11254354.">
    <original>L</original>
    <variation>V</variation>
    <location>
        <position position="969"/>
    </location>
</feature>
<feature type="sequence variant" id="VAR_025287" description="In dbSNP:rs1801227." evidence="8">
    <original>Y</original>
    <variation>H</variation>
    <location>
        <position position="1032"/>
    </location>
</feature>
<feature type="sequence variant" id="VAR_084402" description="In IGS1; uncertain significance; results in intracellular retention of the mutant protein; dbSNP:rs2131820786." evidence="21">
    <original>G</original>
    <variation>E</variation>
    <location>
        <position position="1112"/>
    </location>
</feature>
<feature type="sequence variant" id="VAR_084403" description="In PROCHOB." evidence="24">
    <location>
        <begin position="1158"/>
        <end position="3623"/>
    </location>
</feature>
<feature type="sequence variant" id="VAR_025288" description="In IGS1; decreases strongly the CBLIF binding affinity; dbSNP:rs121434430." evidence="8 10 21">
    <original>P</original>
    <variation>L</variation>
    <location>
        <position position="1297"/>
    </location>
</feature>
<feature type="sequence variant" id="VAR_084404" description="In PROCHOB; uncertain significance; dbSNP:rs200203056." evidence="24">
    <original>N</original>
    <variation>H</variation>
    <location>
        <position position="1303"/>
    </location>
</feature>
<feature type="sequence variant" id="VAR_084405" description="In PROCHOB." evidence="24">
    <location>
        <begin position="1487"/>
        <end position="3623"/>
    </location>
</feature>
<feature type="sequence variant" id="VAR_025289" evidence="8 25">
    <original>N</original>
    <variation>Y</variation>
    <location>
        <position position="1545"/>
    </location>
</feature>
<feature type="sequence variant" id="VAR_025290" description="In dbSNP:rs1801231." evidence="8">
    <original>P</original>
    <variation>S</variation>
    <location>
        <position position="1559"/>
    </location>
</feature>
<feature type="sequence variant" id="VAR_084406" description="Found in individuals with albuminuria; uncertain significance; dbSNP:rs141640975." evidence="24">
    <original>A</original>
    <variation>V</variation>
    <location>
        <position position="1690"/>
    </location>
</feature>
<feature type="sequence variant" id="VAR_025291" description="In dbSNP:rs74116778." evidence="8 25">
    <original>V</original>
    <variation>I</variation>
    <location>
        <position position="1769"/>
    </location>
</feature>
<feature type="sequence variant" id="VAR_047447" description="In dbSNP:rs1276708.">
    <original>R</original>
    <variation>W</variation>
    <location>
        <position position="1775"/>
    </location>
</feature>
<feature type="sequence variant" id="VAR_084407" description="In PROCHOB." evidence="24">
    <location>
        <begin position="1810"/>
        <end position="3623"/>
    </location>
</feature>
<feature type="sequence variant" id="VAR_047448" description="In dbSNP:rs2271462.">
    <original>G</original>
    <variation>S</variation>
    <location>
        <position position="1840"/>
    </location>
</feature>
<feature type="sequence variant" id="VAR_084408" description="In PROCHOB; uncertain significance." evidence="24">
    <original>D</original>
    <variation>Y</variation>
    <location>
        <position position="1854"/>
    </location>
</feature>
<feature type="sequence variant" id="VAR_084409" description="In PROCHOB; uncertain significance; dbSNP:rs201513648." evidence="24">
    <original>G</original>
    <variation>V</variation>
    <location>
        <position position="1928"/>
    </location>
</feature>
<feature type="sequence variant" id="VAR_047449" description="In dbSNP:rs41289305.">
    <original>S</original>
    <variation>G</variation>
    <location>
        <position position="1935"/>
    </location>
</feature>
<feature type="sequence variant" id="VAR_084410" description="In PROCHOB; uncertain significance; dbSNP:rs147617753." evidence="24">
    <original>S</original>
    <variation>Y</variation>
    <location>
        <position position="1947"/>
    </location>
</feature>
<feature type="sequence variant" id="VAR_047450" description="In dbSNP:rs2356590.">
    <original>P</original>
    <variation>T</variation>
    <location>
        <position position="1971"/>
    </location>
</feature>
<feature type="sequence variant" id="VAR_084411" description="In PROCHOB." evidence="24">
    <location>
        <begin position="2030"/>
        <end position="3623"/>
    </location>
</feature>
<feature type="sequence variant" id="VAR_025292" description="Higher frequency in West Africans than in individuals of European ancestry; occurs with variants V-2984 and G-3002 only in individuals of European ancestry; dbSNP:rs62619939." evidence="8 20">
    <original>L</original>
    <variation>F</variation>
    <location>
        <position position="2153"/>
    </location>
</feature>
<feature type="sequence variant" id="VAR_084412" description="In dbSNP:rs144360241." evidence="24">
    <original>N</original>
    <variation>D</variation>
    <location>
        <position position="2157"/>
    </location>
</feature>
<feature type="sequence variant" id="VAR_025293" description="In dbSNP:rs1276712." evidence="25">
    <original>C</original>
    <variation>Y</variation>
    <location>
        <position position="2162"/>
    </location>
</feature>
<feature type="sequence variant" id="VAR_035830" description="In a colorectal cancer sample; somatic mutation; dbSNP:rs529856485." evidence="14">
    <original>A</original>
    <variation>V</variation>
    <location>
        <position position="2252"/>
    </location>
</feature>
<feature type="sequence variant" id="VAR_084413" description="In PROCHOB; uncertain significance; dbSNP:rs779959064." evidence="24">
    <original>L</original>
    <variation>R</variation>
    <location>
        <position position="2261"/>
    </location>
</feature>
<feature type="sequence variant" id="VAR_047451" description="In dbSNP:rs2271460.">
    <original>F</original>
    <variation>C</variation>
    <location>
        <position position="2263"/>
    </location>
</feature>
<feature type="sequence variant" id="VAR_047452" description="In dbSNP:rs11254274.">
    <original>R</original>
    <variation>Q</variation>
    <location>
        <position position="2444"/>
    </location>
</feature>
<feature type="sequence variant" id="VAR_025294" description="In dbSNP:rs3740168." evidence="8">
    <original>P</original>
    <variation>R</variation>
    <location>
        <position position="2575"/>
    </location>
</feature>
<feature type="sequence variant" id="VAR_084414" description="In PROCHOB; uncertain significance; dbSNP:rs138758085." evidence="24">
    <original>C</original>
    <variation>W</variation>
    <location>
        <position position="2599"/>
    </location>
</feature>
<feature type="sequence variant" id="VAR_025295" description="In dbSNP:rs1801237." evidence="8">
    <original>G</original>
    <variation>R</variation>
    <location>
        <position position="2691"/>
    </location>
</feature>
<feature type="sequence variant" id="VAR_025296" description="In dbSNP:rs2796835." evidence="25">
    <original>S</original>
    <variation>W</variation>
    <location>
        <position position="2717"/>
    </location>
</feature>
<feature type="sequence variant" id="VAR_084415" description="In PROCHOB; uncertain significance; dbSNP:rs776663892." evidence="24">
    <original>P</original>
    <variation>L</variation>
    <location>
        <position position="2822"/>
    </location>
</feature>
<feature type="sequence variant" id="VAR_084416" description="In PROCHOB." evidence="24">
    <location>
        <begin position="2831"/>
        <end position="3623"/>
    </location>
</feature>
<feature type="sequence variant" id="VAR_084417" description="In PROCHOB." evidence="24">
    <location>
        <begin position="2833"/>
        <end position="3623"/>
    </location>
</feature>
<feature type="sequence variant" id="VAR_025297" description="In dbSNP:rs1801238." evidence="8">
    <original>L</original>
    <variation>I</variation>
    <location>
        <position position="2879"/>
    </location>
</feature>
<feature type="sequence variant" id="VAR_084418" description="In PROCHOB." evidence="24">
    <location>
        <begin position="2903"/>
        <end position="3623"/>
    </location>
</feature>
<feature type="sequence variant" id="VAR_035831" description="In a breast cancer sample; somatic mutation; dbSNP:rs45551835." evidence="14 24">
    <original>A</original>
    <variation>V</variation>
    <location>
        <position position="2914"/>
    </location>
</feature>
<feature type="sequence variant" id="VAR_047453" description="In dbSNP:rs45569534.">
    <original>E</original>
    <variation>Q</variation>
    <location>
        <position position="2968"/>
    </location>
</feature>
<feature type="sequence variant" id="VAR_025298" description="Not found in West Africans; occurs with variants F-2153 and G-3002 only in individuals of European ancestry; dbSNP:rs1801239." evidence="8 19 20 24">
    <original>I</original>
    <variation>V</variation>
    <location>
        <position position="2984"/>
    </location>
</feature>
<feature type="sequence variant" id="VAR_025299" description="Higher frequency in West Africans than in individuals of European ancestry; occurs with variants F-2153 and V-2984 only in individuals of European ancestry; dbSNP:rs1801240." evidence="8 20">
    <original>E</original>
    <variation>G</variation>
    <location>
        <position position="3002"/>
    </location>
</feature>
<feature type="sequence variant" id="VAR_084419" description="In PROCHOB; uncertain significance; dbSNP:rs370778353." evidence="24">
    <original>Y</original>
    <variation>S</variation>
    <location>
        <position position="3018"/>
    </location>
</feature>
<feature type="sequence variant" id="VAR_084420" description="In PROCHOB; uncertain significance; dbSNP:rs150202444." evidence="24">
    <original>G</original>
    <variation>R</variation>
    <location>
        <position position="3027"/>
    </location>
</feature>
<feature type="sequence variant" id="VAR_035832" description="In a breast cancer sample; somatic mutation; dbSNP:rs111265129." evidence="14">
    <original>I</original>
    <variation>V</variation>
    <location>
        <position position="3189"/>
    </location>
</feature>
<feature type="sequence variant" id="VAR_064704" description="Found in a renal cell carcinoma case; somatic mutation." evidence="18">
    <original>S</original>
    <variation>G</variation>
    <location>
        <position position="3258"/>
    </location>
</feature>
<feature type="sequence variant" id="VAR_084421" description="In PROCHOB; uncertain significance; dbSNP:rs752843169." evidence="24">
    <original>W</original>
    <variation>R</variation>
    <location>
        <position position="3308"/>
    </location>
</feature>
<feature type="sequence variant" id="VAR_084422" description="In PROCHOB." evidence="24">
    <location>
        <begin position="3317"/>
        <end position="3623"/>
    </location>
</feature>
<feature type="sequence variant" id="VAR_084423" description="In PROCHOB; uncertain significance; dbSNP:rs201157846." evidence="24">
    <original>S</original>
    <variation>C</variation>
    <location>
        <position position="3366"/>
    </location>
</feature>
<feature type="sequence variant" id="VAR_025300" description="In dbSNP:rs1801230." evidence="8">
    <original>T</original>
    <variation>I</variation>
    <location>
        <position position="3422"/>
    </location>
</feature>
<feature type="sequence variant" id="VAR_055714" description="In dbSNP:rs7898873.">
    <original>T</original>
    <variation>S</variation>
    <location>
        <position position="3432"/>
    </location>
</feature>
<feature type="sequence variant" id="VAR_084424" description="In PROCHOB; uncertain significance; dbSNP:rs764917718." evidence="24">
    <original>D</original>
    <variation>Y</variation>
    <location>
        <position position="3492"/>
    </location>
</feature>
<feature type="sequence variant" id="VAR_084425" description="In PROCHOB; uncertain significance." evidence="24">
    <original>G</original>
    <variation>D</variation>
    <location>
        <position position="3520"/>
    </location>
</feature>
<feature type="sequence variant" id="VAR_025301" description="In dbSNP:rs1801232." evidence="8">
    <original>N</original>
    <variation>K</variation>
    <location>
        <position position="3552"/>
    </location>
</feature>
<feature type="sequence variant" id="VAR_084426" description="In PROCHOB; uncertain significance; dbSNP:rs775742147." evidence="24">
    <original>D</original>
    <variation>H</variation>
    <location>
        <position position="3609"/>
    </location>
</feature>
<feature type="sequence variant" id="VAR_084427" description="In PROCHOB; uncertain significance." evidence="24">
    <location>
        <begin position="3618"/>
        <end position="3623"/>
    </location>
</feature>
<feature type="sequence conflict" description="In Ref. 1; AAC82612." evidence="27" ref="1">
    <original>A</original>
    <variation>R</variation>
    <location>
        <position position="25"/>
    </location>
</feature>
<feature type="sequence conflict" description="In Ref. 1; AAC82612." evidence="27" ref="1">
    <original>T</original>
    <variation>N</variation>
    <location>
        <position position="146"/>
    </location>
</feature>
<feature type="strand" evidence="33">
    <location>
        <begin position="43"/>
        <end position="47"/>
    </location>
</feature>
<feature type="strand" evidence="33">
    <location>
        <begin position="50"/>
        <end position="54"/>
    </location>
</feature>
<feature type="strand" evidence="33">
    <location>
        <begin position="61"/>
        <end position="64"/>
    </location>
</feature>
<feature type="strand" evidence="33">
    <location>
        <begin position="70"/>
        <end position="73"/>
    </location>
</feature>
<feature type="helix" evidence="33">
    <location>
        <begin position="78"/>
        <end position="99"/>
    </location>
</feature>
<feature type="helix" evidence="33">
    <location>
        <begin position="106"/>
        <end position="110"/>
    </location>
</feature>
<feature type="helix" evidence="33">
    <location>
        <begin position="113"/>
        <end position="120"/>
    </location>
</feature>
<feature type="strand" evidence="32">
    <location>
        <begin position="938"/>
        <end position="942"/>
    </location>
</feature>
<feature type="strand" evidence="32">
    <location>
        <begin position="959"/>
        <end position="963"/>
    </location>
</feature>
<feature type="strand" evidence="32">
    <location>
        <begin position="966"/>
        <end position="972"/>
    </location>
</feature>
<feature type="strand" evidence="32">
    <location>
        <begin position="987"/>
        <end position="993"/>
    </location>
</feature>
<feature type="strand" evidence="32">
    <location>
        <begin position="997"/>
        <end position="1004"/>
    </location>
</feature>
<feature type="strand" evidence="32">
    <location>
        <begin position="1016"/>
        <end position="1025"/>
    </location>
</feature>
<feature type="strand" evidence="32">
    <location>
        <begin position="1038"/>
        <end position="1046"/>
    </location>
</feature>
<feature type="strand" evidence="32">
    <location>
        <begin position="1048"/>
        <end position="1052"/>
    </location>
</feature>
<feature type="turn" evidence="32">
    <location>
        <begin position="1062"/>
        <end position="1065"/>
    </location>
</feature>
<feature type="strand" evidence="32">
    <location>
        <begin position="1073"/>
        <end position="1078"/>
    </location>
</feature>
<feature type="strand" evidence="32">
    <location>
        <begin position="1087"/>
        <end position="1094"/>
    </location>
</feature>
<feature type="strand" evidence="32">
    <location>
        <begin position="1104"/>
        <end position="1114"/>
    </location>
</feature>
<feature type="strand" evidence="32">
    <location>
        <begin position="1119"/>
        <end position="1123"/>
    </location>
</feature>
<feature type="strand" evidence="32">
    <location>
        <begin position="1125"/>
        <end position="1127"/>
    </location>
</feature>
<feature type="strand" evidence="32">
    <location>
        <begin position="1135"/>
        <end position="1137"/>
    </location>
</feature>
<feature type="strand" evidence="32">
    <location>
        <begin position="1139"/>
        <end position="1144"/>
    </location>
</feature>
<feature type="strand" evidence="32">
    <location>
        <begin position="1153"/>
        <end position="1159"/>
    </location>
</feature>
<feature type="strand" evidence="32">
    <location>
        <begin position="1171"/>
        <end position="1177"/>
    </location>
</feature>
<feature type="turn" evidence="32">
    <location>
        <begin position="1179"/>
        <end position="1182"/>
    </location>
</feature>
<feature type="strand" evidence="32">
    <location>
        <begin position="1190"/>
        <end position="1195"/>
    </location>
</feature>
<feature type="strand" evidence="32">
    <location>
        <begin position="1203"/>
        <end position="1209"/>
    </location>
</feature>
<feature type="strand" evidence="32">
    <location>
        <begin position="1220"/>
        <end position="1230"/>
    </location>
</feature>
<feature type="strand" evidence="32">
    <location>
        <begin position="1233"/>
        <end position="1239"/>
    </location>
</feature>
<feature type="strand" evidence="32">
    <location>
        <begin position="1251"/>
        <end position="1253"/>
    </location>
</feature>
<feature type="strand" evidence="32">
    <location>
        <begin position="1255"/>
        <end position="1260"/>
    </location>
</feature>
<feature type="strand" evidence="32">
    <location>
        <begin position="1271"/>
        <end position="1276"/>
    </location>
</feature>
<feature type="strand" evidence="32">
    <location>
        <begin position="1279"/>
        <end position="1283"/>
    </location>
</feature>
<feature type="strand" evidence="32">
    <location>
        <begin position="1287"/>
        <end position="1292"/>
    </location>
</feature>
<feature type="turn" evidence="32">
    <location>
        <begin position="1294"/>
        <end position="1297"/>
    </location>
</feature>
<feature type="strand" evidence="32">
    <location>
        <begin position="1305"/>
        <end position="1311"/>
    </location>
</feature>
<feature type="strand" evidence="32">
    <location>
        <begin position="1319"/>
        <end position="1326"/>
    </location>
</feature>
<feature type="turn" evidence="32">
    <location>
        <begin position="1331"/>
        <end position="1334"/>
    </location>
</feature>
<feature type="strand" evidence="32">
    <location>
        <begin position="1335"/>
        <end position="1342"/>
    </location>
</feature>
<feature type="strand" evidence="32">
    <location>
        <begin position="1345"/>
        <end position="1350"/>
    </location>
</feature>
<feature type="strand" evidence="32">
    <location>
        <begin position="1362"/>
        <end position="1371"/>
    </location>
</feature>
<feature type="strand" evidence="32">
    <location>
        <begin position="1381"/>
        <end position="1386"/>
    </location>
</feature>
<gene>
    <name type="primary">CUBN</name>
    <name type="synonym">IFCR</name>
</gene>
<dbReference type="EMBL" id="AF034611">
    <property type="protein sequence ID" value="AAC82612.1"/>
    <property type="molecule type" value="mRNA"/>
</dbReference>
<dbReference type="EMBL" id="EF444970">
    <property type="protein sequence ID" value="ACA05973.1"/>
    <property type="molecule type" value="Genomic_DNA"/>
</dbReference>
<dbReference type="EMBL" id="EF444970">
    <property type="protein sequence ID" value="ACA05974.1"/>
    <property type="molecule type" value="Genomic_DNA"/>
</dbReference>
<dbReference type="EMBL" id="AC067747">
    <property type="status" value="NOT_ANNOTATED_CDS"/>
    <property type="molecule type" value="Genomic_DNA"/>
</dbReference>
<dbReference type="EMBL" id="AL365215">
    <property type="status" value="NOT_ANNOTATED_CDS"/>
    <property type="molecule type" value="Genomic_DNA"/>
</dbReference>
<dbReference type="EMBL" id="AL596445">
    <property type="status" value="NOT_ANNOTATED_CDS"/>
    <property type="molecule type" value="Genomic_DNA"/>
</dbReference>
<dbReference type="EMBL" id="AL731551">
    <property type="status" value="NOT_ANNOTATED_CDS"/>
    <property type="molecule type" value="Genomic_DNA"/>
</dbReference>
<dbReference type="CCDS" id="CCDS7113.1"/>
<dbReference type="PIR" id="T09456">
    <property type="entry name" value="T09456"/>
</dbReference>
<dbReference type="RefSeq" id="NP_001072.2">
    <property type="nucleotide sequence ID" value="NM_001081.4"/>
</dbReference>
<dbReference type="PDB" id="3KQ4">
    <property type="method" value="X-ray"/>
    <property type="resolution" value="3.30 A"/>
    <property type="chains" value="B/D/F=932-1388"/>
</dbReference>
<dbReference type="PDB" id="6GJE">
    <property type="method" value="X-ray"/>
    <property type="resolution" value="2.30 A"/>
    <property type="chains" value="B/C/D=26-135"/>
</dbReference>
<dbReference type="PDBsum" id="3KQ4"/>
<dbReference type="PDBsum" id="6GJE"/>
<dbReference type="SMR" id="O60494"/>
<dbReference type="BioGRID" id="113724">
    <property type="interactions" value="10"/>
</dbReference>
<dbReference type="ComplexPortal" id="CPX-5774">
    <property type="entry name" value="Cubam cobalamin uptake receptor complex"/>
</dbReference>
<dbReference type="CORUM" id="O60494"/>
<dbReference type="DIP" id="DIP-58583N"/>
<dbReference type="FunCoup" id="O60494">
    <property type="interactions" value="134"/>
</dbReference>
<dbReference type="IntAct" id="O60494">
    <property type="interactions" value="4"/>
</dbReference>
<dbReference type="MINT" id="O60494"/>
<dbReference type="STRING" id="9606.ENSP00000367064"/>
<dbReference type="DrugBank" id="DB00115">
    <property type="generic name" value="Cyanocobalamin"/>
</dbReference>
<dbReference type="DrugBank" id="DB00200">
    <property type="generic name" value="Hydroxocobalamin"/>
</dbReference>
<dbReference type="TCDB" id="9.B.87.1.34">
    <property type="family name" value="the selenoprotein p receptor (selp-receptor) family"/>
</dbReference>
<dbReference type="GlyConnect" id="2033">
    <property type="glycosylation" value="1 N-Linked glycan (1 site)"/>
</dbReference>
<dbReference type="GlyCosmos" id="O60494">
    <property type="glycosylation" value="51 sites, 5 glycans"/>
</dbReference>
<dbReference type="GlyGen" id="O60494">
    <property type="glycosylation" value="52 sites, 168 N-linked glycans (14 sites), 2 O-linked glycans (4 sites)"/>
</dbReference>
<dbReference type="iPTMnet" id="O60494"/>
<dbReference type="PhosphoSitePlus" id="O60494"/>
<dbReference type="BioMuta" id="CUBN"/>
<dbReference type="MassIVE" id="O60494"/>
<dbReference type="PaxDb" id="9606-ENSP00000367064"/>
<dbReference type="PeptideAtlas" id="O60494"/>
<dbReference type="ProteomicsDB" id="49432"/>
<dbReference type="Antibodypedia" id="56802">
    <property type="antibodies" value="162 antibodies from 20 providers"/>
</dbReference>
<dbReference type="DNASU" id="8029"/>
<dbReference type="Ensembl" id="ENST00000377833.10">
    <property type="protein sequence ID" value="ENSP00000367064.4"/>
    <property type="gene ID" value="ENSG00000107611.16"/>
</dbReference>
<dbReference type="GeneID" id="8029"/>
<dbReference type="KEGG" id="hsa:8029"/>
<dbReference type="MANE-Select" id="ENST00000377833.10">
    <property type="protein sequence ID" value="ENSP00000367064.4"/>
    <property type="RefSeq nucleotide sequence ID" value="NM_001081.4"/>
    <property type="RefSeq protein sequence ID" value="NP_001072.2"/>
</dbReference>
<dbReference type="UCSC" id="uc001ioo.4">
    <property type="organism name" value="human"/>
</dbReference>
<dbReference type="AGR" id="HGNC:2548"/>
<dbReference type="CTD" id="8029"/>
<dbReference type="DisGeNET" id="8029"/>
<dbReference type="GeneCards" id="CUBN"/>
<dbReference type="HGNC" id="HGNC:2548">
    <property type="gene designation" value="CUBN"/>
</dbReference>
<dbReference type="HPA" id="ENSG00000107611">
    <property type="expression patterns" value="Tissue enriched (kidney)"/>
</dbReference>
<dbReference type="MalaCards" id="CUBN"/>
<dbReference type="MIM" id="261100">
    <property type="type" value="phenotype"/>
</dbReference>
<dbReference type="MIM" id="602997">
    <property type="type" value="gene"/>
</dbReference>
<dbReference type="MIM" id="618884">
    <property type="type" value="phenotype"/>
</dbReference>
<dbReference type="neXtProt" id="NX_O60494"/>
<dbReference type="OpenTargets" id="ENSG00000107611"/>
<dbReference type="Orphanet" id="35858">
    <property type="disease" value="Imerslund-Graesbeck syndrome"/>
</dbReference>
<dbReference type="PharmGKB" id="PA27044"/>
<dbReference type="VEuPathDB" id="HostDB:ENSG00000107611"/>
<dbReference type="eggNOG" id="KOG4292">
    <property type="taxonomic scope" value="Eukaryota"/>
</dbReference>
<dbReference type="GeneTree" id="ENSGT00940000155299"/>
<dbReference type="HOGENOM" id="CLU_000172_1_0_1"/>
<dbReference type="InParanoid" id="O60494"/>
<dbReference type="OMA" id="RGFTVRW"/>
<dbReference type="OrthoDB" id="6022136at2759"/>
<dbReference type="PAN-GO" id="O60494">
    <property type="GO annotations" value="1 GO annotation based on evolutionary models"/>
</dbReference>
<dbReference type="PhylomeDB" id="O60494"/>
<dbReference type="TreeFam" id="TF316224"/>
<dbReference type="PathwayCommons" id="O60494"/>
<dbReference type="Reactome" id="R-HSA-196791">
    <property type="pathway name" value="Vitamin D (calciferol) metabolism"/>
</dbReference>
<dbReference type="Reactome" id="R-HSA-3359462">
    <property type="pathway name" value="Defective AMN causes MGA1"/>
</dbReference>
<dbReference type="Reactome" id="R-HSA-3359463">
    <property type="pathway name" value="Defective CUBN causes MGA1"/>
</dbReference>
<dbReference type="Reactome" id="R-HSA-8964011">
    <property type="pathway name" value="HDL clearance"/>
</dbReference>
<dbReference type="Reactome" id="R-HSA-9758881">
    <property type="pathway name" value="Uptake of dietary cobalamins into enterocytes"/>
</dbReference>
<dbReference type="SignaLink" id="O60494"/>
<dbReference type="BioGRID-ORCS" id="8029">
    <property type="hits" value="12 hits in 1153 CRISPR screens"/>
</dbReference>
<dbReference type="ChiTaRS" id="CUBN">
    <property type="organism name" value="human"/>
</dbReference>
<dbReference type="EvolutionaryTrace" id="O60494"/>
<dbReference type="GeneWiki" id="Cubilin"/>
<dbReference type="GenomeRNAi" id="8029"/>
<dbReference type="Pharos" id="O60494">
    <property type="development level" value="Tbio"/>
</dbReference>
<dbReference type="PRO" id="PR:O60494"/>
<dbReference type="Proteomes" id="UP000005640">
    <property type="component" value="Chromosome 10"/>
</dbReference>
<dbReference type="RNAct" id="O60494">
    <property type="molecule type" value="protein"/>
</dbReference>
<dbReference type="Bgee" id="ENSG00000107611">
    <property type="expression patterns" value="Expressed in adult organism and 129 other cell types or tissues"/>
</dbReference>
<dbReference type="ExpressionAtlas" id="O60494">
    <property type="expression patterns" value="baseline and differential"/>
</dbReference>
<dbReference type="GO" id="GO:0016324">
    <property type="term" value="C:apical plasma membrane"/>
    <property type="evidence" value="ECO:0000314"/>
    <property type="project" value="UniProtKB"/>
</dbReference>
<dbReference type="GO" id="GO:0031526">
    <property type="term" value="C:brush border membrane"/>
    <property type="evidence" value="ECO:0000250"/>
    <property type="project" value="UniProtKB"/>
</dbReference>
<dbReference type="GO" id="GO:0005905">
    <property type="term" value="C:clathrin-coated pit"/>
    <property type="evidence" value="ECO:0007669"/>
    <property type="project" value="UniProtKB-KW"/>
</dbReference>
<dbReference type="GO" id="GO:0005829">
    <property type="term" value="C:cytosol"/>
    <property type="evidence" value="ECO:0000304"/>
    <property type="project" value="Reactome"/>
</dbReference>
<dbReference type="GO" id="GO:0030139">
    <property type="term" value="C:endocytic vesicle"/>
    <property type="evidence" value="ECO:0000314"/>
    <property type="project" value="UniProtKB"/>
</dbReference>
<dbReference type="GO" id="GO:0005783">
    <property type="term" value="C:endoplasmic reticulum"/>
    <property type="evidence" value="ECO:0007669"/>
    <property type="project" value="Ensembl"/>
</dbReference>
<dbReference type="GO" id="GO:0005768">
    <property type="term" value="C:endosome"/>
    <property type="evidence" value="ECO:0007669"/>
    <property type="project" value="UniProtKB-SubCell"/>
</dbReference>
<dbReference type="GO" id="GO:0070062">
    <property type="term" value="C:extracellular exosome"/>
    <property type="evidence" value="ECO:0000314"/>
    <property type="project" value="UniProtKB"/>
</dbReference>
<dbReference type="GO" id="GO:0031232">
    <property type="term" value="C:extrinsic component of external side of plasma membrane"/>
    <property type="evidence" value="ECO:0000303"/>
    <property type="project" value="UniProtKB"/>
</dbReference>
<dbReference type="GO" id="GO:0005794">
    <property type="term" value="C:Golgi apparatus"/>
    <property type="evidence" value="ECO:0007669"/>
    <property type="project" value="Ensembl"/>
</dbReference>
<dbReference type="GO" id="GO:0043202">
    <property type="term" value="C:lysosomal lumen"/>
    <property type="evidence" value="ECO:0000304"/>
    <property type="project" value="Reactome"/>
</dbReference>
<dbReference type="GO" id="GO:0005765">
    <property type="term" value="C:lysosomal membrane"/>
    <property type="evidence" value="ECO:0007669"/>
    <property type="project" value="UniProtKB-SubCell"/>
</dbReference>
<dbReference type="GO" id="GO:0016020">
    <property type="term" value="C:membrane"/>
    <property type="evidence" value="ECO:0000314"/>
    <property type="project" value="ComplexPortal"/>
</dbReference>
<dbReference type="GO" id="GO:0031528">
    <property type="term" value="C:microvillus membrane"/>
    <property type="evidence" value="ECO:0000314"/>
    <property type="project" value="MGI"/>
</dbReference>
<dbReference type="GO" id="GO:0005886">
    <property type="term" value="C:plasma membrane"/>
    <property type="evidence" value="ECO:0000318"/>
    <property type="project" value="GO_Central"/>
</dbReference>
<dbReference type="GO" id="GO:0043235">
    <property type="term" value="C:receptor complex"/>
    <property type="evidence" value="ECO:0000353"/>
    <property type="project" value="ComplexPortal"/>
</dbReference>
<dbReference type="GO" id="GO:0005509">
    <property type="term" value="F:calcium ion binding"/>
    <property type="evidence" value="ECO:0007669"/>
    <property type="project" value="InterPro"/>
</dbReference>
<dbReference type="GO" id="GO:0038024">
    <property type="term" value="F:cargo receptor activity"/>
    <property type="evidence" value="ECO:0000314"/>
    <property type="project" value="MGI"/>
</dbReference>
<dbReference type="GO" id="GO:0031419">
    <property type="term" value="F:cobalamin binding"/>
    <property type="evidence" value="ECO:0007669"/>
    <property type="project" value="UniProtKB-KW"/>
</dbReference>
<dbReference type="GO" id="GO:0042803">
    <property type="term" value="F:protein homodimerization activity"/>
    <property type="evidence" value="ECO:0000314"/>
    <property type="project" value="UniProtKB"/>
</dbReference>
<dbReference type="GO" id="GO:0038023">
    <property type="term" value="F:signaling receptor activity"/>
    <property type="evidence" value="ECO:0000304"/>
    <property type="project" value="ProtInc"/>
</dbReference>
<dbReference type="GO" id="GO:0008203">
    <property type="term" value="P:cholesterol metabolic process"/>
    <property type="evidence" value="ECO:0007669"/>
    <property type="project" value="UniProtKB-KW"/>
</dbReference>
<dbReference type="GO" id="GO:0009235">
    <property type="term" value="P:cobalamin metabolic process"/>
    <property type="evidence" value="ECO:0000314"/>
    <property type="project" value="MGI"/>
</dbReference>
<dbReference type="GO" id="GO:0015889">
    <property type="term" value="P:cobalamin transport"/>
    <property type="evidence" value="ECO:0000314"/>
    <property type="project" value="ComplexPortal"/>
</dbReference>
<dbReference type="GO" id="GO:0051649">
    <property type="term" value="P:establishment of localization in cell"/>
    <property type="evidence" value="ECO:0007669"/>
    <property type="project" value="Ensembl"/>
</dbReference>
<dbReference type="GO" id="GO:0042953">
    <property type="term" value="P:lipoprotein transport"/>
    <property type="evidence" value="ECO:0007669"/>
    <property type="project" value="Ensembl"/>
</dbReference>
<dbReference type="GO" id="GO:0006898">
    <property type="term" value="P:receptor-mediated endocytosis"/>
    <property type="evidence" value="ECO:0000303"/>
    <property type="project" value="UniProtKB"/>
</dbReference>
<dbReference type="GO" id="GO:0009617">
    <property type="term" value="P:response to bacterium"/>
    <property type="evidence" value="ECO:0007669"/>
    <property type="project" value="Ensembl"/>
</dbReference>
<dbReference type="GO" id="GO:0001894">
    <property type="term" value="P:tissue homeostasis"/>
    <property type="evidence" value="ECO:0000303"/>
    <property type="project" value="UniProtKB"/>
</dbReference>
<dbReference type="CDD" id="cd00041">
    <property type="entry name" value="CUB"/>
    <property type="match status" value="27"/>
</dbReference>
<dbReference type="CDD" id="cd22201">
    <property type="entry name" value="cubilin_NTD"/>
    <property type="match status" value="1"/>
</dbReference>
<dbReference type="CDD" id="cd00054">
    <property type="entry name" value="EGF_CA"/>
    <property type="match status" value="6"/>
</dbReference>
<dbReference type="FunFam" id="2.10.25.10:FF:000379">
    <property type="entry name" value="Cubilin"/>
    <property type="match status" value="1"/>
</dbReference>
<dbReference type="FunFam" id="2.10.25.10:FF:000429">
    <property type="entry name" value="Cubilin"/>
    <property type="match status" value="1"/>
</dbReference>
<dbReference type="FunFam" id="2.10.25.10:FF:000554">
    <property type="entry name" value="Cubilin"/>
    <property type="match status" value="1"/>
</dbReference>
<dbReference type="FunFam" id="2.60.120.290:FF:000045">
    <property type="entry name" value="Cubilin"/>
    <property type="match status" value="1"/>
</dbReference>
<dbReference type="FunFam" id="2.60.120.290:FF:000047">
    <property type="entry name" value="Cubilin"/>
    <property type="match status" value="1"/>
</dbReference>
<dbReference type="FunFam" id="2.60.120.290:FF:000050">
    <property type="entry name" value="Cubilin"/>
    <property type="match status" value="1"/>
</dbReference>
<dbReference type="FunFam" id="2.60.120.290:FF:000053">
    <property type="entry name" value="Cubilin"/>
    <property type="match status" value="1"/>
</dbReference>
<dbReference type="FunFam" id="2.60.120.290:FF:000062">
    <property type="entry name" value="Cubilin"/>
    <property type="match status" value="1"/>
</dbReference>
<dbReference type="FunFam" id="2.10.25.10:FF:000633">
    <property type="entry name" value="cubilin"/>
    <property type="match status" value="1"/>
</dbReference>
<dbReference type="FunFam" id="2.10.25.10:FF:000658">
    <property type="entry name" value="cubilin"/>
    <property type="match status" value="1"/>
</dbReference>
<dbReference type="FunFam" id="2.60.120.290:FF:000018">
    <property type="entry name" value="cubilin"/>
    <property type="match status" value="4"/>
</dbReference>
<dbReference type="FunFam" id="2.60.120.290:FF:000061">
    <property type="entry name" value="cubilin"/>
    <property type="match status" value="1"/>
</dbReference>
<dbReference type="FunFam" id="2.60.120.290:FF:000013">
    <property type="entry name" value="Membrane frizzled-related protein"/>
    <property type="match status" value="8"/>
</dbReference>
<dbReference type="FunFam" id="2.60.120.290:FF:000003">
    <property type="entry name" value="Neuropilin"/>
    <property type="match status" value="4"/>
</dbReference>
<dbReference type="FunFam" id="2.10.25.10:FF:000260">
    <property type="entry name" value="Notch receptor 4"/>
    <property type="match status" value="1"/>
</dbReference>
<dbReference type="FunFam" id="2.60.120.290:FF:000005">
    <property type="entry name" value="Procollagen C-endopeptidase enhancer 1"/>
    <property type="match status" value="5"/>
</dbReference>
<dbReference type="FunFam" id="2.10.25.10:FF:000143">
    <property type="entry name" value="Protein crumbs 1"/>
    <property type="match status" value="1"/>
</dbReference>
<dbReference type="Gene3D" id="2.10.25.10">
    <property type="entry name" value="Laminin"/>
    <property type="match status" value="7"/>
</dbReference>
<dbReference type="Gene3D" id="2.60.120.290">
    <property type="entry name" value="Spermadhesin, CUB domain"/>
    <property type="match status" value="27"/>
</dbReference>
<dbReference type="InterPro" id="IPR000859">
    <property type="entry name" value="CUB_dom"/>
</dbReference>
<dbReference type="InterPro" id="IPR001881">
    <property type="entry name" value="EGF-like_Ca-bd_dom"/>
</dbReference>
<dbReference type="InterPro" id="IPR000742">
    <property type="entry name" value="EGF-like_dom"/>
</dbReference>
<dbReference type="InterPro" id="IPR000152">
    <property type="entry name" value="EGF-type_Asp/Asn_hydroxyl_site"/>
</dbReference>
<dbReference type="InterPro" id="IPR018097">
    <property type="entry name" value="EGF_Ca-bd_CS"/>
</dbReference>
<dbReference type="InterPro" id="IPR024731">
    <property type="entry name" value="EGF_dom"/>
</dbReference>
<dbReference type="InterPro" id="IPR009030">
    <property type="entry name" value="Growth_fac_rcpt_cys_sf"/>
</dbReference>
<dbReference type="InterPro" id="IPR049883">
    <property type="entry name" value="NOTCH1_EGF-like"/>
</dbReference>
<dbReference type="InterPro" id="IPR035914">
    <property type="entry name" value="Sperma_CUB_dom_sf"/>
</dbReference>
<dbReference type="PANTHER" id="PTHR24251">
    <property type="entry name" value="OVOCHYMASE-RELATED"/>
    <property type="match status" value="1"/>
</dbReference>
<dbReference type="Pfam" id="PF00431">
    <property type="entry name" value="CUB"/>
    <property type="match status" value="27"/>
</dbReference>
<dbReference type="Pfam" id="PF00008">
    <property type="entry name" value="EGF"/>
    <property type="match status" value="3"/>
</dbReference>
<dbReference type="Pfam" id="PF12947">
    <property type="entry name" value="EGF_3"/>
    <property type="match status" value="1"/>
</dbReference>
<dbReference type="Pfam" id="PF07645">
    <property type="entry name" value="EGF_CA"/>
    <property type="match status" value="3"/>
</dbReference>
<dbReference type="SMART" id="SM00042">
    <property type="entry name" value="CUB"/>
    <property type="match status" value="27"/>
</dbReference>
<dbReference type="SMART" id="SM00181">
    <property type="entry name" value="EGF"/>
    <property type="match status" value="8"/>
</dbReference>
<dbReference type="SMART" id="SM00179">
    <property type="entry name" value="EGF_CA"/>
    <property type="match status" value="7"/>
</dbReference>
<dbReference type="SUPFAM" id="SSF57196">
    <property type="entry name" value="EGF/Laminin"/>
    <property type="match status" value="6"/>
</dbReference>
<dbReference type="SUPFAM" id="SSF57184">
    <property type="entry name" value="Growth factor receptor domain"/>
    <property type="match status" value="1"/>
</dbReference>
<dbReference type="SUPFAM" id="SSF49854">
    <property type="entry name" value="Spermadhesin, CUB domain"/>
    <property type="match status" value="27"/>
</dbReference>
<dbReference type="PROSITE" id="PS00010">
    <property type="entry name" value="ASX_HYDROXYL"/>
    <property type="match status" value="4"/>
</dbReference>
<dbReference type="PROSITE" id="PS01180">
    <property type="entry name" value="CUB"/>
    <property type="match status" value="27"/>
</dbReference>
<dbReference type="PROSITE" id="PS00022">
    <property type="entry name" value="EGF_1"/>
    <property type="match status" value="4"/>
</dbReference>
<dbReference type="PROSITE" id="PS01186">
    <property type="entry name" value="EGF_2"/>
    <property type="match status" value="2"/>
</dbReference>
<dbReference type="PROSITE" id="PS50026">
    <property type="entry name" value="EGF_3"/>
    <property type="match status" value="6"/>
</dbReference>
<dbReference type="PROSITE" id="PS01187">
    <property type="entry name" value="EGF_CA"/>
    <property type="match status" value="3"/>
</dbReference>
<keyword id="KW-0002">3D-structure</keyword>
<keyword id="KW-0106">Calcium</keyword>
<keyword id="KW-1003">Cell membrane</keyword>
<keyword id="KW-0153">Cholesterol metabolism</keyword>
<keyword id="KW-0165">Cleavage on pair of basic residues</keyword>
<keyword id="KW-0168">Coated pit</keyword>
<keyword id="KW-0846">Cobalamin</keyword>
<keyword id="KW-0170">Cobalt</keyword>
<keyword id="KW-0903">Direct protein sequencing</keyword>
<keyword id="KW-0225">Disease variant</keyword>
<keyword id="KW-1015">Disulfide bond</keyword>
<keyword id="KW-0245">EGF-like domain</keyword>
<keyword id="KW-0254">Endocytosis</keyword>
<keyword id="KW-0967">Endosome</keyword>
<keyword id="KW-0325">Glycoprotein</keyword>
<keyword id="KW-0443">Lipid metabolism</keyword>
<keyword id="KW-0458">Lysosome</keyword>
<keyword id="KW-0472">Membrane</keyword>
<keyword id="KW-0479">Metal-binding</keyword>
<keyword id="KW-0597">Phosphoprotein</keyword>
<keyword id="KW-0653">Protein transport</keyword>
<keyword id="KW-1267">Proteomics identification</keyword>
<keyword id="KW-0675">Receptor</keyword>
<keyword id="KW-1185">Reference proteome</keyword>
<keyword id="KW-0677">Repeat</keyword>
<keyword id="KW-0732">Signal</keyword>
<keyword id="KW-0753">Steroid metabolism</keyword>
<keyword id="KW-1207">Sterol metabolism</keyword>
<keyword id="KW-0813">Transport</keyword>
<organism>
    <name type="scientific">Homo sapiens</name>
    <name type="common">Human</name>
    <dbReference type="NCBI Taxonomy" id="9606"/>
    <lineage>
        <taxon>Eukaryota</taxon>
        <taxon>Metazoa</taxon>
        <taxon>Chordata</taxon>
        <taxon>Craniata</taxon>
        <taxon>Vertebrata</taxon>
        <taxon>Euteleostomi</taxon>
        <taxon>Mammalia</taxon>
        <taxon>Eutheria</taxon>
        <taxon>Euarchontoglires</taxon>
        <taxon>Primates</taxon>
        <taxon>Haplorrhini</taxon>
        <taxon>Catarrhini</taxon>
        <taxon>Hominidae</taxon>
        <taxon>Homo</taxon>
    </lineage>
</organism>
<sequence length="3623" mass="398736">MMNMSLPFLWSLLTLLIFAEVNGEAGELELQRQKRSINLQQPRMATERGNLVFLTGSAQNIEFRTGSLGKIKLNDEDLSECLHQIQKNKEDIIELKGSAIGLPQNISSQIYQLNSKLVDLERKFQGLQQTVDKKVCSSNPCQNGGTCLNLHDSFFCICPPQWKGPLCSADVNECEIYSGTPLSCQNGGTCVNTMGSYSCHCPPETYGPQCASKYDDCEGGSVARCVHGICEDLMREQAGEPKYSCVCDAGWMFSPNSPACTLDRDECSFQPGPCSTLVQCFNTQGSFYCGACPTGWQGNGYICEDINECEINNGGCSVAPPVECVNTPGSSHCQACPPGYQGDGRVCTLTDICSVSNGGCHPDASCSSTLGSLPLCTCLPGYTGNGYGPNGCVQLSNICLSHPCLNGQCIDTVSGYFCKCDSGWTGVNCTENINECLSNPCLNGGTCVDGVDSFSCECTRLWTGALCQVPQQVCGESLSGINGSFSYRSPDVGYVHDVNCFWVIKTEMGKVLRITFTFFRLESMDNCPHEFLQVYDGDSSSAFQLGRFCGSSLPHELLSSDNALYFHLYSEHLRNGRGFTVRWETQQPECGGILTGPYGSIKSPGYPGNYPPGRDCVWIVVTSPDLLVTFTFGTLSLEHHDDCNKDYLEIRDGPLYQDPLLGKFCTTFSVPPLQTTGPFARIHFHSDSQISDQGFHITYLTSPSDLRCGGNYTDPEGELFLPELSGPFTHTRQCVYMMKQPQGEQIQINFTHVELQCQSDSSQNYIEVRDGETLLGKVCGNGTISHIKSITNSVWIRFKIDASVEKASFRAVYQVACGDELTGEGVIRSPFFPNVYPGERTCRWTIHQPQSQVILLNFTVFEIGSSAHCETDYVEIGSSSILGSPENKKYCGTDIPSFITSVYNFLYVTFVKSSSTENHGFMAKFSAEDLACGEILTESTGTIQSPGHPNVYPHGINCTWHILVQPNHLIHLMFETFHLEFHYNCTNDYLEVYDTDSETSLGRYCGKSIPPSLTSSGNSLMLVFVTDSDLAYEGFLINYEAISAATACLQDYTDDLGTFTSPNFPNNYPNNWECIYRITVRTGQLIAVHFTNFSLEEAIGNYYTDFLEIRDGGYEKSPLLGIFYGSNLPPTIISHSNKLWLKFKSDQIDTRSGFSAYWDGSSTGCGGNLTTSSGTFISPNYPMPYYHSSECYWWLKSSHGSAFELEFKDFHLEHHPNCTLDYLAVYDGPSSNSHLLTQLCGDEKPPLIRSSGDSMFIKLRTDEGQQGRGFKAEYRQTCENVVIVNQTYGILESIGYPNPYSENQHCNWTIRATTGNTVNYTFLAFDLEHHINCSTDYLELYDGPRQMGRYCGVDLPPPGSTTSSKLQVLLLTDGVGRREKGFQMQWFVYGCGGELSGATGSFSSPGFPNRYPPNKECIWYIRTDPGSSIQLTIHDFDVEYHSRCNFDVLEIYGGPDFHSPRIAQLCTQRSPENPMQVSSTGNELAIRFKTDLSINGRGFNASWQAVTGGCGGIFQAPSGEIHSPNYPSPYRSNTDCSWVIRVDRNHRVLLNFTDFDLEPQDSCIMAYDGLSSTMSRLARTCGREQLANPIVSSGNSLFLRFQSGPSRQNRGFRAQFRQACGGHILTSSFDTVSSPRFPANYPNNQNCSWIIQAQPPLNHITLSFTHFELERSTTCARDFVEILDGGHEDAPLRGRYCGTDMPHPITSFSSALTLRFVSDSSISAGGFHTTVTASVSACGGTFYMAEGIFNSPGYPDIYPPNVECVWNIVSSPGNRLQLSFISFQLEDSQDCSRDFVEIREGNATGHLVGRYCGNSFPLNYSSIVGHTLWVRFISDGSGSGTGFQATFMKIFGNDNIVGTHGKVASPFWPENYPHNSNYQWTVNVNASHVVHGRILEMDIEEIQNCYYDKLRIYDGPSIHARLIGAYCGTQTESFSSTGNSLTFHFYSDSSISGKGFLLEWFAVDAPDGVLPTIAPGACGGFLRTGDAPVFLFSPGWPDSYSNRVDCTWLIQAPDSTVELNILSLDIESHRTCAYDSLVIRDGDNNLAQQLAVLCGREIPGPIRSTGEYMFIRFTSDSSVTRAGFNASFHKSCGGYLHADRGIITSPKYPETYPSNLNCSWHVLVQSGLTIAVHFEQPFQIPNGDSSCNQGDYLVLRNGPDICSPPLGPPGGNGHFCGSHASSTLFTSDNQMFVQFISDHSNEGQGFKIKYEAKSLACGGNVYIHDADSAGYVTSPNHPHNYPPHADCIWILAAPPETRIQLQFEDRFDIEVTPNCTSNYLELRDGVDSDAPILSKFCGTSLPSSQWSSGEVMYLRFRSDNSPTHVGFKAKYSIAQCGGRVPGQSGVVESIGHPTLPYRDNLFCEWHLQGLSGHYLTISFEDFNLQNSSGCEKDFVEIWDNHTSGNILGRYCGNTIPDSIDTSSNTAVVRFVTDGSVTASGFRLRFESSMEECGGDLQGSIGTFTSPNYPNPNPHGRICEWRITAPEGRRITLMFNNLRLATHPSCNNEHVIVFNGIRSNSPQLEKLCSSVNVSNEIKSSGNTMKVIFFTDGSRPYGGFTASYTSSEDAVCGGSLPNTPEGNFTSPGYDGVRNYSRNLNCEWTLSNPNQGNSSISIHFEDFYLESHQDCQFDVLEFRVGDADGPLMWRLCGPSKPTLPLVIPYSQVWIHFVTNERVEHIGFHAKYSFTDCGGIQIGDSGVITSPNYPNAYDSLTHCSSLLEAPQGHTITLTFSDFDIEPHTTCAWDSVTVRNGGSPESPIIGQYCGNSNPRTIQSGSNQLVVTFNSDHSLQGGGFYATWNTQTLGCGGIFHSDNGTIRSPHWPQNFPENSRCSWTAITHKSKHLEISFDNNFLIPSGDGQCQNSFVKVWAGTEEVDKALLATGCGNVAPGPVITPSNTFTAVFQSQEAPAQGFSASFVSRCGSNFTGPSGYIISPNYPKQYDNNMNCTYVIEANPLSVVLLTFVSFHLEARSAVTGSCVNDGVHIIRGYSVMSTPFATVCGDEMPAPLTIAGPVLLNFYSNEQITDFGFKFSYRIISCGGVFNFSSGIITSPAYSYADYPNDMHCLYTITVSDDKVIELKFSDFDVVPSTSCSHDYLAIYDGANTSDPLLGKFCGSKRPPNVKSSNNSMLLVFKTDSFQTAKGWKMSFRQTLGPQQGCGGYLTGSNNTFASPDSDSNGMYDKNLNCVWIIIAPVNKVIHLTFNTFALEAASTRQRCLYDYVKLYDGDSENANLAGTFCGSTVPAPFISSGNFLTVQFISDLTLEREGFNATYTIMDMPCGGTYNATWTPQNISSPNSSDPDVPFSICTWVIDSPPHQQVKITVWALQLTSQDCTQNYLQLQDSPQGHGNSRFQFCGRNASAVPVFYSSMSTAMVIFKSGVVNRNSRMSFTYQIADCNRDYHKAFGNLRSPGWPDNYDNDKDCTVTLTAPQNHTISLFFHSLGIENSVECRNDFLEVRNGSNSNSPLLGKYCGTLLPNPVFSQNNELYLRFKSDSVTSDRGYEIIWTSSPSGCGGTLYGDRGSFTSPGYPGTYPNNTYCEWVLVAPAGRLVTINFYFISIDDPGDCVQNYLTLYDGPNASSPSSGPYCGGDTSIAPFVASSNQVFIKFHADYARRPSAFRLTWDS</sequence>
<proteinExistence type="evidence at protein level"/>
<accession>O60494</accession>
<accession>B0YIZ4</accession>
<accession>Q5VTA6</accession>
<accession>Q96RU9</accession>
<comment type="function">
    <text evidence="9 11 12 13 25">Endocytic receptor which plays a role in lipoprotein, vitamin and iron metabolism by facilitating their uptake (PubMed:10371504, PubMed:11606717, PubMed:11717447, PubMed:14576052, PubMed:9572993). Acts together with LRP2 to mediate endocytosis of high-density lipoproteins, GC, hemoglobin, ALB, TF and SCGB1A1. Acts together with AMN to mediate endocytosis of the CBLIF-cobalamin complex (PubMed:14576052, PubMed:9572993). Binds to ALB, MB, Kappa and lambda-light chains, TF, hemoglobin, GC, SCGB1A1, APOA1, high density lipoprotein, and the CBLIF-cobalamin complex. Ligand binding requires calcium (PubMed:9572993). Serves as important transporter in several absorptive epithelia, including intestine, renal proximal tubules and embryonic yolk sac. May play an important role in the development of the peri-implantation embryo through internalization of APOA1 and cholesterol. Binds to LGALS3 at the maternal-fetal interface.</text>
</comment>
<comment type="subunit">
    <text evidence="2 9 11 12 13 15 17 22 23">Interacts with AMN (PubMed:14576052, PubMed:20237569, PubMed:29402915, PubMed:30523278). Component of the cubam complex composed of one CUBN trimer and one AMN chain (PubMed:30523278). The cubam complex can dimerize (By similarity). Interacts with LRP2 in a dual-receptor complex in a calcium-dependent manner. Found in a complex with PID1/PCLI1, LRP1 and CUBNI. Interacts with LRP1 and PID1/PCLI1.</text>
</comment>
<comment type="interaction">
    <interactant intactId="EBI-3953632">
        <id>O60494</id>
    </interactant>
    <interactant intactId="EBI-11510881">
        <id>Q9BXJ7</id>
        <label>AMN</label>
    </interactant>
    <organismsDiffer>false</organismsDiffer>
    <experiments>3</experiments>
</comment>
<comment type="interaction">
    <interactant intactId="EBI-3953632">
        <id>O60494</id>
    </interactant>
    <interactant intactId="EBI-3953638">
        <id>P27352</id>
        <label>CBLIF</label>
    </interactant>
    <organismsDiffer>false</organismsDiffer>
    <experiments>2</experiments>
</comment>
<comment type="subcellular location">
    <subcellularLocation>
        <location evidence="4">Apical cell membrane</location>
        <topology evidence="27">Peripheral membrane protein</topology>
    </subcellularLocation>
    <subcellularLocation>
        <location evidence="13 22 23">Cell membrane</location>
        <topology evidence="27 29">Peripheral membrane protein</topology>
    </subcellularLocation>
    <subcellularLocation>
        <location evidence="13">Membrane</location>
        <location evidence="13">Coated pit</location>
    </subcellularLocation>
    <subcellularLocation>
        <location evidence="13 22">Endosome</location>
    </subcellularLocation>
    <subcellularLocation>
        <location evidence="3">Lysosome membrane</location>
        <topology evidence="27">Peripheral membrane protein</topology>
    </subcellularLocation>
    <text evidence="3 22 23">Lacks a transmembrane domain and depends on interaction with AMN for location at the plasma membrane (PubMed:29402915, PubMed:30523278). Colocalizes with AMN and LRP2 in the endocytotic apparatus of epithelial cells (By similarity).</text>
</comment>
<comment type="tissue specificity">
    <text evidence="25">Detected in kidney cortex (at protein level) (PubMed:9572993). Expressed in kidney proximal tubule cells, placenta, visceral yolk-sac cells and in absorptive intestinal cells. Expressed in the epithelium of intestine and kidney.</text>
</comment>
<comment type="domain">
    <text evidence="3">The CUB domains 5 to 8 mediate binding to CBLIF and ALB. CUB domains 1 and 2 mediate interaction with LRP2.</text>
</comment>
<comment type="domain">
    <text evidence="2">The cubam complex is composed of a 400 Angstrom long stem and a globular crown region. The stem region is probably formed by AMN and the CUBN N-terminal region, including the EGF-like domains. The crown is probably formed by the CUBN CUB domains.</text>
</comment>
<comment type="PTM">
    <text evidence="25">The precursor is cleaved by a trans-Golgi proteinase furin, removing a propeptide.</text>
</comment>
<comment type="PTM">
    <text evidence="13 17 22">N-glycosylated.</text>
</comment>
<comment type="disease" evidence="8 10 16 21">
    <disease id="DI-02246">
        <name>Imerslund-Grasbeck syndrome 1</name>
        <acronym>IGS1</acronym>
        <description>A form of Imerslund-Grasbeck syndrome, a rare autosomal recessive disorder characterized by vitamin B12 deficiency commonly resulting in megaloblastic anemia, which is responsive to parenteral vitamin B12 therapy and appears in infancy or early childhood. Clinical manifestations include failure to thrive, infections and neurological damage. Mild proteinuria, with no signs of kidney disease, is present in about half of the patients.</description>
        <dbReference type="MIM" id="261100"/>
    </disease>
    <text>The disease is caused by variants affecting the gene represented in this entry.</text>
</comment>
<comment type="disease" evidence="24">
    <disease id="DI-05842">
        <name>Proteinuria, chronic benign</name>
        <acronym>PROCHOB</acronym>
        <description>An autosomal recessive condition characterized by isolated, non-progressive proteinuria in absence of renal disease and hypertension. Onset of proteinuria is in the first decade of life.</description>
        <dbReference type="MIM" id="618884"/>
    </disease>
    <text>The disease is caused by variants affecting the gene represented in this entry.</text>
</comment>
<evidence type="ECO:0000250" key="1"/>
<evidence type="ECO:0000250" key="2">
    <source>
        <dbReference type="UniProtKB" id="F1RWC3"/>
    </source>
</evidence>
<evidence type="ECO:0000250" key="3">
    <source>
        <dbReference type="UniProtKB" id="O70244"/>
    </source>
</evidence>
<evidence type="ECO:0000250" key="4">
    <source>
        <dbReference type="UniProtKB" id="Q9JLB4"/>
    </source>
</evidence>
<evidence type="ECO:0000255" key="5"/>
<evidence type="ECO:0000255" key="6">
    <source>
        <dbReference type="PROSITE-ProRule" id="PRU00059"/>
    </source>
</evidence>
<evidence type="ECO:0000255" key="7">
    <source>
        <dbReference type="PROSITE-ProRule" id="PRU00076"/>
    </source>
</evidence>
<evidence type="ECO:0000269" key="8">
    <source>
    </source>
</evidence>
<evidence type="ECO:0000269" key="9">
    <source>
    </source>
</evidence>
<evidence type="ECO:0000269" key="10">
    <source>
    </source>
</evidence>
<evidence type="ECO:0000269" key="11">
    <source>
    </source>
</evidence>
<evidence type="ECO:0000269" key="12">
    <source>
    </source>
</evidence>
<evidence type="ECO:0000269" key="13">
    <source>
    </source>
</evidence>
<evidence type="ECO:0000269" key="14">
    <source>
    </source>
</evidence>
<evidence type="ECO:0000269" key="15">
    <source>
    </source>
</evidence>
<evidence type="ECO:0000269" key="16">
    <source>
    </source>
</evidence>
<evidence type="ECO:0000269" key="17">
    <source>
    </source>
</evidence>
<evidence type="ECO:0000269" key="18">
    <source>
    </source>
</evidence>
<evidence type="ECO:0000269" key="19">
    <source>
    </source>
</evidence>
<evidence type="ECO:0000269" key="20">
    <source>
    </source>
</evidence>
<evidence type="ECO:0000269" key="21">
    <source>
    </source>
</evidence>
<evidence type="ECO:0000269" key="22">
    <source>
    </source>
</evidence>
<evidence type="ECO:0000269" key="23">
    <source>
    </source>
</evidence>
<evidence type="ECO:0000269" key="24">
    <source>
    </source>
</evidence>
<evidence type="ECO:0000269" key="25">
    <source>
    </source>
</evidence>
<evidence type="ECO:0000303" key="26">
    <source>
    </source>
</evidence>
<evidence type="ECO:0000305" key="27"/>
<evidence type="ECO:0000305" key="28">
    <source>
    </source>
</evidence>
<evidence type="ECO:0000305" key="29">
    <source>
    </source>
</evidence>
<evidence type="ECO:0007744" key="30">
    <source>
        <dbReference type="PDB" id="3KQ4"/>
    </source>
</evidence>
<evidence type="ECO:0007744" key="31">
    <source>
        <dbReference type="PDB" id="6GJE"/>
    </source>
</evidence>
<evidence type="ECO:0007829" key="32">
    <source>
        <dbReference type="PDB" id="3KQ4"/>
    </source>
</evidence>
<evidence type="ECO:0007829" key="33">
    <source>
        <dbReference type="PDB" id="6GJE"/>
    </source>
</evidence>